<sequence>MNKGWLELESDPGLFTLLVEDFGVKGVQVEEIYDLQSKCQGPVYGFIFLFKWIEERRSRRKVSTLVDDTSVIDDDIVNNMFFAHQLIPNSCATHALLSVLLNCSSVDLGPTLSRMKDFTKGFSPESKGYAIGNAPELAKAHNSHARPEPRHLPEKQNGLSAVRTMEAFHFVSYVPITGRLFELDGLKVYPIDHGPWGEDEEWTDKARRVIMERIGLATAGEPYHDIRFNLMAVVPDRRIKYEARLHVLKVNRQTVLEALQQLIRVTQPELIQTHKSQESQLPEESKSASNKSPLVLEANRAPAASEGNHTDGAEEAAGSCAQAPSHSPPNKPKLVVKPPGSSLNGVHPNPTPIVQRLPAFLDNHNYAKSPMQEEEDLAAGVGRSRVPVRPPQQYSDDEDDYEDDEEDDVQNTNSALRYKGKGTGKPGALSGSADGQLSVLQPNTINVLAEKLKESQKDLSIPLSIKTSSGAGSPAVAVPTHSQPSPTPSNESTDTASEIGSAFNSPLRSPIRSANPTRPSSPVTSHISKVLFGEDDSLLRVDCIRYNRAVRDLGPVISTGLLHLAEDGVLSPLALTEGGKGSSPSIRPIQGSQGSSSPVEKEVVEATDSREKTGMVRPGEPLSGEKYSPKELLALLKCVEAEIANYEACLKEEVEKRKKFKIDDQRRTHNYDEFICTFISMLAQEGMLANLVEQNISVRRRQGVSIGRLHKQRKPDRRKRSRPYKAKRQ</sequence>
<feature type="chain" id="PRO_0000211069" description="Ubiquitin carboxyl-terminal hydrolase BAP1">
    <location>
        <begin position="1"/>
        <end position="729"/>
    </location>
</feature>
<feature type="domain" description="UCH catalytic" evidence="3">
    <location>
        <begin position="4"/>
        <end position="235"/>
    </location>
</feature>
<feature type="domain" description="ULD" evidence="4">
    <location>
        <begin position="670"/>
        <end position="698"/>
    </location>
</feature>
<feature type="region of interest" description="Disordered" evidence="5">
    <location>
        <begin position="301"/>
        <end position="351"/>
    </location>
</feature>
<feature type="region of interest" description="Disordered" evidence="5">
    <location>
        <begin position="372"/>
        <end position="435"/>
    </location>
</feature>
<feature type="region of interest" description="Disordered" evidence="5">
    <location>
        <begin position="464"/>
        <end position="524"/>
    </location>
</feature>
<feature type="region of interest" description="Disordered" evidence="5">
    <location>
        <begin position="575"/>
        <end position="623"/>
    </location>
</feature>
<feature type="region of interest" description="Interaction with BRCA1">
    <location>
        <begin position="596"/>
        <end position="721"/>
    </location>
</feature>
<feature type="region of interest" description="Interaction with YY1" evidence="13">
    <location>
        <begin position="642"/>
        <end position="686"/>
    </location>
</feature>
<feature type="region of interest" description="Interaction with nucleosomal DNA forming a DNA clamp with ASXL1" evidence="34">
    <location>
        <begin position="699"/>
        <end position="701"/>
    </location>
</feature>
<feature type="region of interest" description="Disordered" evidence="5">
    <location>
        <begin position="703"/>
        <end position="729"/>
    </location>
</feature>
<feature type="region of interest" description="Positively charged C-terminal extension (CTE)" evidence="26 33">
    <location>
        <begin position="713"/>
        <end position="729"/>
    </location>
</feature>
<feature type="coiled-coil region" evidence="2">
    <location>
        <begin position="636"/>
        <end position="656"/>
    </location>
</feature>
<feature type="short sequence motif" description="Arg-finger motif" evidence="34">
    <location>
        <begin position="56"/>
        <end position="60"/>
    </location>
</feature>
<feature type="short sequence motif" description="HBM-like motif" evidence="10 11 13 23">
    <location>
        <begin position="363"/>
        <end position="366"/>
    </location>
</feature>
<feature type="short sequence motif" description="Classical bipartite Nuclear localization signal (NLS)" evidence="8 20 31">
    <location>
        <begin position="699"/>
        <end position="722"/>
    </location>
</feature>
<feature type="short sequence motif" description="Non-classical PY-nuclear localization signal (PY-NLS)" evidence="31">
    <location>
        <begin position="717"/>
        <end position="724"/>
    </location>
</feature>
<feature type="compositionally biased region" description="Acidic residues" evidence="5">
    <location>
        <begin position="395"/>
        <end position="409"/>
    </location>
</feature>
<feature type="compositionally biased region" description="Polar residues" evidence="5">
    <location>
        <begin position="480"/>
        <end position="524"/>
    </location>
</feature>
<feature type="compositionally biased region" description="Polar residues" evidence="5">
    <location>
        <begin position="582"/>
        <end position="598"/>
    </location>
</feature>
<feature type="compositionally biased region" description="Basic and acidic residues" evidence="5">
    <location>
        <begin position="599"/>
        <end position="614"/>
    </location>
</feature>
<feature type="active site" description="Nucleophile" evidence="3 8 9 10 11 23 35">
    <location>
        <position position="91"/>
    </location>
</feature>
<feature type="active site" description="Proton donor" evidence="3">
    <location>
        <position position="169"/>
    </location>
</feature>
<feature type="site" description="Transition state stabilizer" evidence="3">
    <location>
        <position position="85"/>
    </location>
</feature>
<feature type="site" description="Important for enzyme activity" evidence="3">
    <location>
        <position position="184"/>
    </location>
</feature>
<feature type="modified residue" description="Phosphoserine" evidence="45">
    <location>
        <position position="292"/>
    </location>
</feature>
<feature type="modified residue" description="Phosphoserine" evidence="45">
    <location>
        <position position="369"/>
    </location>
</feature>
<feature type="modified residue" description="Phosphoserine" evidence="1">
    <location>
        <position position="395"/>
    </location>
</feature>
<feature type="modified residue" description="Phosphothreonine" evidence="23">
    <location>
        <position position="493"/>
    </location>
</feature>
<feature type="modified residue" description="Phosphoserine" evidence="45">
    <location>
        <position position="521"/>
    </location>
</feature>
<feature type="modified residue" description="Phosphoserine" evidence="45">
    <location>
        <position position="537"/>
    </location>
</feature>
<feature type="modified residue" description="Phosphoserine" evidence="45">
    <location>
        <position position="585"/>
    </location>
</feature>
<feature type="modified residue" description="Phosphoserine" evidence="45">
    <location>
        <position position="597"/>
    </location>
</feature>
<feature type="sequence variant" id="VAR_086937" description="In KURIS; dbSNP:rs2153228682." evidence="30">
    <original>P</original>
    <variation>A</variation>
    <location>
        <position position="12"/>
    </location>
</feature>
<feature type="sequence variant" id="VAR_086938" description="In KURIS; loss-of-function variant; increased steady-state levels of ubiquitinated H2A are found in patient cells; unable to rescue impaired H2AK119ub deubiquitination when expressed in BAP1-deficient cells; does not affect localization to the nucleus; dbSNP:rs2153228682." evidence="30">
    <original>P</original>
    <variation>T</variation>
    <location>
        <position position="12"/>
    </location>
</feature>
<feature type="sequence variant" id="VAR_086939" description="In KURIS; uncertain significance; dbSNP:rs2153228535." evidence="30">
    <original>E</original>
    <variation>K</variation>
    <location>
        <position position="31"/>
    </location>
</feature>
<feature type="sequence variant" id="VAR_075251" description="Found in a primary uveal melanoma; somatic mutation; induces cytoplasmic accumulation; loss of deubiquitinase activity; up-regulates heat shock response; induces formation of amyloid-beta aggregates; dbSNP:rs2153228345." evidence="22 25">
    <original>I</original>
    <variation>F</variation>
    <location>
        <position position="47"/>
    </location>
</feature>
<feature type="sequence variant" id="VAR_086940" description="In KURIS; uncertain significance; dbSNP:rs2153228340." evidence="30">
    <original>L</original>
    <variation>P</variation>
    <location>
        <position position="49"/>
    </location>
</feature>
<feature type="sequence variant" id="VAR_065976" description="Found in a malignant pleural mesothelioma sample; somatic mutation; dbSNP:rs747311942." evidence="14">
    <original>S</original>
    <variation>C</variation>
    <location>
        <position position="63"/>
    </location>
</feature>
<feature type="sequence variant" id="VAR_065977" description="Found in a malignant pleural mesothelioma sample; somatic mutation; induces cytoplasmic accumulation; loss of deubiquitinase activity; up-regulates heat shock response; induces formation of amyloid-beta aggregates." evidence="14 25">
    <original>F</original>
    <variation>V</variation>
    <location>
        <position position="81"/>
    </location>
</feature>
<feature type="sequence variant" id="VAR_086941" description="In KURIS; dbSNP:rs1705222655." evidence="30">
    <original>C</original>
    <variation>G</variation>
    <location>
        <position position="91"/>
    </location>
</feature>
<feature type="sequence variant" id="VAR_086942" description="In KURIS; loss-of-function variant; unable to rescue impaired H2AK119ub deubiquitination when expressed in BAP1-deficient cells; does not affect localization to the nucleus; dbSNP:rs1705222655." evidence="30">
    <original>C</original>
    <variation>R</variation>
    <location>
        <position position="91"/>
    </location>
</feature>
<feature type="sequence variant" id="VAR_086943" description="In KURIS; loss-of-function variant; increased steady-state level of ubiquitinated H2A are found in patient cells; unable to rescue impaired H2AK119ub deubiquitination when expressed in BAP1-deficient cells; abolishes deubiquitinase activity; does not affect its ability to interfere with BRCA1 E3 ligase activity; does not affect localization to the nucleus; has a dominant negative effect on cell growth; does not affect interaction with FOXK1 and FOXK2; has no effect on PR-DUB complex assembly; unable to activate transcription; dbSNP:rs1559591264." evidence="9 11 13 23 30">
    <original>C</original>
    <variation>S</variation>
    <location>
        <position position="91"/>
    </location>
</feature>
<feature type="sequence variant" id="VAR_065978" description="Found in a malignant pleural mesothelioma sample; dbSNP:rs2153228144." evidence="14">
    <original>C</original>
    <variation>W</variation>
    <location>
        <position position="91"/>
    </location>
</feature>
<feature type="sequence variant" id="VAR_087531" description="In TPDS1; significantly increased risk for renal cell carcinoma; dbSNP:rs375129361." evidence="18">
    <original>T</original>
    <variation>A</variation>
    <location>
        <position position="93"/>
    </location>
</feature>
<feature type="sequence variant" id="VAR_063498" description="In a lung cancer sample; also found in a malignant pleural mesothelioma cell line; induces cytoplasmic accumulation; loss of deubiquitinase activity; up-regulates heat shock response; induces formation of amyloid-beta aggregates." evidence="6 8 14 25">
    <original>A</original>
    <variation>D</variation>
    <location>
        <position position="95"/>
    </location>
</feature>
<feature type="sequence variant" id="VAR_086944" description="In KURIS; loss-of-function variant; unable to rescue impaired H2AK119ub deubiquitination when expressed in BAP1-deficient cells; does not affect localization to the nucleus; dbSNP:rs2153227828." evidence="30">
    <original>H</original>
    <variation>R</variation>
    <location>
        <position position="169"/>
    </location>
</feature>
<feature type="sequence variant" id="VAR_063499" description="In a lung cancer sample; induces cytoplasmic accumulation; impairs deubiquitinase activity; up-regulates heat shock response; induces formation of beta-amyloid aggregates; dbSNP:rs2153227803." evidence="6 8 25">
    <original>G</original>
    <variation>V</variation>
    <location>
        <position position="178"/>
    </location>
</feature>
<feature type="sequence variant" id="VAR_087532" description="In TPDS1." evidence="17">
    <location>
        <begin position="267"/>
        <end position="729"/>
    </location>
</feature>
<feature type="sequence variant" id="VAR_065979" description="Found in a malignant pleural mesothelioma sample; dbSNP:rs149974450." evidence="14">
    <original>E</original>
    <variation>A</variation>
    <location>
        <position position="315"/>
    </location>
</feature>
<feature type="sequence variant" id="VAR_051517" description="In dbSNP:rs35353781.">
    <original>V</original>
    <variation>E</variation>
    <location>
        <position position="616"/>
    </location>
</feature>
<feature type="sequence variant" id="VAR_065980" description="Found in a malignant pleural mesothelioma cell line." evidence="14">
    <original>E</original>
    <variation>V</variation>
    <location>
        <position position="685"/>
    </location>
</feature>
<feature type="sequence variant" id="VAR_086945" description="In KURIS; uncertain significance; able to rescue impaired H2AK119ub deubiquitination when expressed in BAP1-deficient cells; does not affect localization to the nucleus; dbSNP:rs1440748203." evidence="30">
    <original>R</original>
    <variation>Q</variation>
    <location>
        <position position="718"/>
    </location>
</feature>
<feature type="mutagenesis site" description="Probably disrupts interaction with the histone H2A-H2B acidic patch. Severely attenuates deubiquitination of histone H2AK119ub1 substrates in the context of the nucleosome but does not disrupt nucleosome interaction." evidence="33 34">
    <original>RRSRR</original>
    <variation>AASAA</variation>
    <location>
        <begin position="56"/>
        <end position="60"/>
    </location>
</feature>
<feature type="mutagenesis site" description="Reduces deubiquitination activity towards H2AK119ub1 substrates in the context of the nucleosome." evidence="34">
    <original>R</original>
    <variation>C</variation>
    <location>
        <position position="56"/>
    </location>
</feature>
<feature type="mutagenesis site" description="Reduces deubiquitination activity towards H2AK119ub1 substrates in the context of the nucleosome." evidence="34">
    <original>R</original>
    <variation>W</variation>
    <location>
        <position position="59"/>
    </location>
</feature>
<feature type="mutagenesis site" description="Abolishes deubiquitinase activity. Has no effect on interaction with HCFC1." evidence="8 10 35">
    <original>C</original>
    <variation>A</variation>
    <location>
        <position position="91"/>
    </location>
</feature>
<feature type="mutagenesis site" description="Severely attenuates deubiquitination of histone H2AK119ub1 substrates, possibly due to disruption of homodimerization." evidence="26">
    <original>N</original>
    <variation>R</variation>
    <location>
        <position position="251"/>
    </location>
</feature>
<feature type="mutagenesis site" description="Abolishes interaction with HCFC1 without affecting interaction with FOXK1 and FOXK2." evidence="10 11 23">
    <original>NHNY</original>
    <variation>AAAA</variation>
    <location>
        <begin position="363"/>
        <end position="366"/>
    </location>
</feature>
<feature type="mutagenesis site" description="Does not affect interaction with FOXK1 and FOXK2." evidence="23">
    <original>S</original>
    <variation>A</variation>
    <location>
        <position position="489"/>
    </location>
</feature>
<feature type="mutagenesis site" description="Does not affect interaction with FOXK1 and FOXK2." evidence="23">
    <original>S</original>
    <variation>A</variation>
    <location>
        <position position="492"/>
    </location>
</feature>
<feature type="mutagenesis site" description="Abolished interaction with FOXK1 and FOXK2." evidence="23">
    <original>T</original>
    <variation>A</variation>
    <variation>L</variation>
    <location>
        <position position="493"/>
    </location>
</feature>
<feature type="mutagenesis site" description="Does not affect interaction with FOXK1 and FOXK2." evidence="23">
    <original>T</original>
    <variation>A</variation>
    <location>
        <position position="495"/>
    </location>
</feature>
<feature type="mutagenesis site" description="Severely attenuated deubiquitination of histone H2AK119ub1 substrates, possibly due to disruption of homodimerization. No effect on intrinsic catalytic activity." evidence="26">
    <original>L</original>
    <variation>A</variation>
    <location>
        <position position="635"/>
    </location>
</feature>
<feature type="mutagenesis site" description="Does not affect nuclear localization." evidence="8">
    <original>KRKKFK</original>
    <variation>AAAAAA</variation>
    <location>
        <begin position="656"/>
        <end position="661"/>
    </location>
</feature>
<feature type="mutagenesis site" description="Predominantly localizes to the cytosol." evidence="31">
    <location>
        <begin position="684"/>
        <end position="729"/>
    </location>
</feature>
<feature type="mutagenesis site" description="Abolishes ubiquitination by UBE2O." evidence="20">
    <location>
        <begin position="691"/>
        <end position="711"/>
    </location>
</feature>
<feature type="mutagenesis site" description="Abolishes interaction with BRCA1." evidence="35">
    <original>L</original>
    <variation>P</variation>
    <location>
        <position position="691"/>
    </location>
</feature>
<feature type="mutagenesis site" description="Abolishes deubiquitination activity towards H2AK119ub1 substrates in the context of the nucleosome, probably due to disruption of nucleosome interaction. Does not affect deubiquitination of H2AK119ub1 on free histones." evidence="33">
    <location>
        <begin position="697"/>
        <end position="729"/>
    </location>
</feature>
<feature type="mutagenesis site" description="Severely reduces deubiquitination activity towards H2AK119ub1 substrates in the context of the nucleosome but only mildly disrupts nucleosome interaction." evidence="33">
    <location>
        <begin position="699"/>
        <end position="702"/>
    </location>
</feature>
<feature type="mutagenesis site" description="Reduced nucleosomal binding." evidence="34">
    <original>RRR</original>
    <variation>AAA</variation>
    <location>
        <begin position="699"/>
        <end position="701"/>
    </location>
</feature>
<feature type="mutagenesis site" description="Reduced nucleosomal binding." evidence="34">
    <original>RR</original>
    <variation>DD</variation>
    <location>
        <begin position="699"/>
        <end position="700"/>
    </location>
</feature>
<feature type="mutagenesis site" description="Slight or no reduction of deubiquitination efficiency towards H2AK119ub1 substrates in the context of the nucleosome." evidence="33 34">
    <original>R</original>
    <variation>W</variation>
    <location>
        <position position="699"/>
    </location>
</feature>
<feature type="mutagenesis site" description="Slightly reduces deubiquitination activity towards H2AK119ub1 substrates in the context of the nucleosome." evidence="33">
    <original>R</original>
    <variation>Q</variation>
    <location>
        <position position="700"/>
    </location>
</feature>
<feature type="mutagenesis site" description="Reduces deubiquitination activity towards H2AK119ub1 substrates in the context of the nucleosome." evidence="33 34">
    <original>R</original>
    <variation>C</variation>
    <location>
        <position position="701"/>
    </location>
</feature>
<feature type="mutagenesis site" description="Slightly reduces deubiquitination activity towards H2AK119ub1 substrates in the context of the nucleosome." evidence="33">
    <location>
        <position position="702"/>
    </location>
</feature>
<feature type="mutagenesis site" description="Reduces deubiquitination activity towards H2AK119ub1 substrates in the context of the nucleosome." evidence="33">
    <original>G</original>
    <variation>P</variation>
    <variation>R</variation>
    <location>
        <position position="703"/>
    </location>
</feature>
<feature type="mutagenesis site" description="Reduces deubiquitination activity towards H2AK119ub1 substrates in the context of the nucleosome." evidence="33">
    <original>R</original>
    <variation>A</variation>
    <location>
        <position position="708"/>
    </location>
</feature>
<feature type="mutagenesis site" description="Disrupts nucleosome interaction and abolishes deubiquitination activity towards H2AK119ub1 substrates in the context of the nucleosome. Does not affect deubiquitination of H2AK119ub1 on free histones." evidence="33">
    <location>
        <begin position="711"/>
        <end position="729"/>
    </location>
</feature>
<feature type="mutagenesis site" description="Reduces deubiquitination activity towards H2AK119ub1 substrates in the context of the nucleosome, probably due to disruption of nucleosome interaction. Does not affect deubiquitination of H2AK119ub1 on free histones." evidence="33">
    <location>
        <begin position="711"/>
        <end position="718"/>
    </location>
</feature>
<feature type="mutagenesis site" description="Impairs deubiquitination activity of histone H2AK118ub1 substrates, probably due to disruption of nucleosome association." evidence="26">
    <location>
        <begin position="713"/>
        <end position="729"/>
    </location>
</feature>
<feature type="mutagenesis site" description="Reduces deubiquitination activity towards H2AK119ub1 substrates in the context of the nucleosome." evidence="33">
    <original>R</original>
    <variation>A</variation>
    <location>
        <position position="713"/>
    </location>
</feature>
<feature type="mutagenesis site" description="Abolishes nuclear localization." evidence="8">
    <original>RRKRSR</original>
    <variation>AAAAAA</variation>
    <location>
        <begin position="717"/>
        <end position="722"/>
    </location>
</feature>
<feature type="mutagenesis site" description="Disrupts nucleosome interaction and reduces deubiquitination activity towards H2AK119ub1 substrates in the context of the nucleosome." evidence="33">
    <location>
        <begin position="718"/>
        <end position="729"/>
    </location>
</feature>
<feature type="helix" evidence="46">
    <location>
        <begin position="12"/>
        <end position="22"/>
    </location>
</feature>
<feature type="strand" evidence="46">
    <location>
        <begin position="28"/>
        <end position="30"/>
    </location>
</feature>
<feature type="helix" evidence="47">
    <location>
        <begin position="37"/>
        <end position="39"/>
    </location>
</feature>
<feature type="strand" evidence="46">
    <location>
        <begin position="46"/>
        <end position="52"/>
    </location>
</feature>
<feature type="helix" evidence="46">
    <location>
        <begin position="55"/>
        <end position="59"/>
    </location>
</feature>
<feature type="strand" evidence="46">
    <location>
        <begin position="68"/>
        <end position="70"/>
    </location>
</feature>
<feature type="helix" evidence="46">
    <location>
        <begin position="75"/>
        <end position="79"/>
    </location>
</feature>
<feature type="helix" evidence="46">
    <location>
        <begin position="91"/>
        <end position="101"/>
    </location>
</feature>
<feature type="strand" evidence="47">
    <location>
        <begin position="105"/>
        <end position="107"/>
    </location>
</feature>
<feature type="helix" evidence="46">
    <location>
        <begin position="110"/>
        <end position="119"/>
    </location>
</feature>
<feature type="strand" evidence="47">
    <location>
        <begin position="120"/>
        <end position="122"/>
    </location>
</feature>
<feature type="helix" evidence="46">
    <location>
        <begin position="124"/>
        <end position="132"/>
    </location>
</feature>
<feature type="helix" evidence="46">
    <location>
        <begin position="135"/>
        <end position="143"/>
    </location>
</feature>
<feature type="helix" evidence="46">
    <location>
        <begin position="148"/>
        <end position="151"/>
    </location>
</feature>
<feature type="strand" evidence="46">
    <location>
        <begin position="167"/>
        <end position="175"/>
    </location>
</feature>
<feature type="strand" evidence="46">
    <location>
        <begin position="178"/>
        <end position="186"/>
    </location>
</feature>
<feature type="strand" evidence="47">
    <location>
        <begin position="187"/>
        <end position="189"/>
    </location>
</feature>
<feature type="strand" evidence="47">
    <location>
        <begin position="191"/>
        <end position="195"/>
    </location>
</feature>
<feature type="strand" evidence="46">
    <location>
        <begin position="198"/>
        <end position="200"/>
    </location>
</feature>
<feature type="helix" evidence="46">
    <location>
        <begin position="203"/>
        <end position="217"/>
    </location>
</feature>
<feature type="strand" evidence="46">
    <location>
        <begin position="220"/>
        <end position="222"/>
    </location>
</feature>
<feature type="strand" evidence="46">
    <location>
        <begin position="228"/>
        <end position="234"/>
    </location>
</feature>
<feature type="helix" evidence="46">
    <location>
        <begin position="237"/>
        <end position="242"/>
    </location>
</feature>
<feature type="helix" evidence="46">
    <location>
        <begin position="648"/>
        <end position="667"/>
    </location>
</feature>
<feature type="helix" evidence="46">
    <location>
        <begin position="672"/>
        <end position="685"/>
    </location>
</feature>
<feature type="helix" evidence="46">
    <location>
        <begin position="688"/>
        <end position="694"/>
    </location>
</feature>
<feature type="strand" evidence="46">
    <location>
        <begin position="700"/>
        <end position="703"/>
    </location>
</feature>
<feature type="turn" evidence="47">
    <location>
        <begin position="710"/>
        <end position="712"/>
    </location>
</feature>
<proteinExistence type="evidence at protein level"/>
<comment type="function">
    <text evidence="7 8 9 10 11 12 13 20 23 27 29 30 32">Deubiquitinating enzyme that plays a key role in chromatin by mediating deubiquitination of histone H2A and HCFC1 (PubMed:12485996, PubMed:18757409, PubMed:20436459, PubMed:25451922, PubMed:35051358). Catalytic component of the polycomb repressive deubiquitinase (PR-DUB) complex, a complex that specifically mediates deubiquitination of histone H2A monoubiquitinated at 'Lys-120' (H2AK119ub1) (PubMed:20436459, PubMed:25451922, PubMed:30664650, PubMed:35051358). Does not deubiquitinate monoubiquitinated histone H2B (PubMed:20436459, PubMed:30664650). The PR-DUB complex is an epigenetic regulator of gene expression and acts as a transcriptional coactivator, affecting genes involved in development, cell communication, signaling, cell proliferation and cell viability (PubMed:20805357, PubMed:30664650, PubMed:36180891). Antagonizes PRC1 mediated H2AK119ub1 monoubiquitination (PubMed:30664650). As part of the PR-DUB complex, associates with chromatin enriched in histone marks H3K4me1, H3K4me3, and H3K27Ac, but not in H3K27me3 (PubMed:36180891). Recruited to specific gene-regulatory regions by YY1 (PubMed:20805357). Acts as a regulator of cell growth by mediating deubiquitination of HCFC1 N-terminal and C-terminal chains, with some specificity toward 'Lys-48'-linked polyubiquitin chains compared to 'Lys-63'-linked polyubiquitin chains (PubMed:19188440, PubMed:19815555). Deubiquitination of HCFC1 does not lead to increase stability of HCFC1 (PubMed:19188440, PubMed:19815555). Interferes with the BRCA1 and BARD1 heterodimer activity by inhibiting their ability to mediate ubiquitination and autoubiquitination (PubMed:19117993). It however does not mediate deubiquitination of BRCA1 and BARD1 (PubMed:19117993). Able to mediate autodeubiquitination via intramolecular interactions to counteract monoubiquitination at the nuclear localization signal (NLS), thereby protecting it from cytoplasmic sequestration (PubMed:24703950). Negatively regulates epithelial-mesenchymal transition (EMT) of trophoblast stem cells during placental development by regulating genes involved in epithelial cell integrity, cell adhesion and cytoskeletal organization (PubMed:34170818).</text>
</comment>
<comment type="catalytic activity">
    <reaction evidence="12 26 35">
        <text>Thiol-dependent hydrolysis of ester, thioester, amide, peptide and isopeptide bonds formed by the C-terminal Gly of ubiquitin (a 76-residue protein attached to proteins as an intracellular targeting signal).</text>
        <dbReference type="EC" id="3.4.19.12"/>
    </reaction>
</comment>
<comment type="biophysicochemical properties">
    <kinetics>
        <KM evidence="26">4.7 uM for ubiquitin-7-amido-4-methylcoumarin (UB-AMC)</KM>
    </kinetics>
</comment>
<comment type="subunit">
    <text evidence="9 10 11 12 13 19 21 23 26 27 31 32 33 34 35 40">Core component of the polycomb repressive deubiquitinase (PR-DUB) complex, at least composed of BAP1, one of ASXL1, ASXL2 or (probably) ASXL3, and one of MBD5 or MBD6 (PubMed:20436459, PubMed:24634419, PubMed:30664650, PubMed:36180891). The PR-DUB core associates with a number of accessory proteins, including FOXK1, FOXK2, KDM1B, HCFC1, YY1 and OGT; KDM1B specifically associates with ASXL2 PR-DUB complexes (Probable) (PubMed:20805357, PubMed:30664650). The BAP1 deubiquitinase activity is not required for PR-DUB assembly (PubMed:20805357). Homodimerizes (via coiled-coil hinge-region between the UCH and ULD domains) to mediate assembly of 2 copies of the BAP1-ASXL heterodimer into a bisymmetric tetramer; dimerization enhances association with nucleosomes (PubMed:30258054, PubMed:35446349). The PR-DUB complex associates with nucleosomes to mediate deubiquitination of 'lys-120' of histone H2AK118ub1 substrates; the association requires the positively charged C-terminal tail of BAP1 (PubMed:30258054, PubMed:36991118, PubMed:37556531). Interacts (via ULD domain) with ASXL1 (via DEUBAD domain); the interaction is direct and forms a ubiquitin binding cleft (PubMed:36180891, PubMed:36991118, PubMed:37556531). The interaction with ASXL1 stabilizes BAP1 but is not required for nucleosome binding (PubMed:36180891). Associates (via C-terminus) with nucleosome and chromatosome complexes through direct interaction with DNA and the histone3/4 dimer; this association displaces the histone-2A C-terminal tail, extending and orienting the H2AK118ub1 substrate towards the BAP1 deubiquitinase active site (PubMed:36991118, PubMed:37556531). Also interacts (via arginine finger) directly with the histone H2A-H2B acidic patch; this interaction is not critical for nucleosome-chromatosome association but may play a role in orienting the H2AK118ub1 substrate towards the PR-DUB complex active site (PubMed:36991118). Interacts with BRCA1 (via the RING finger) (PubMed:19117993, PubMed:9528852). Interacts (via HBM-like motif) with HCFC1 (PubMed:19188440, PubMed:19815555, PubMed:20805357). Interacts (via a C-terminal region overlapping the ULD domain) with YY1; the interaction is direct and requires the interaction with HCFC1 (PubMed:20805357). Interacts (when phosphorylated at Thr-493) with FOXK1 (PubMed:25451922). Interacts (when phosphorylated at Thr-493) with FOXK2; leading to recruitment of the PR-DUB complex and repression of FOXK2 target genes (PubMed:24748658, PubMed:25451922). Interacts (via non-classical PY-NLS) with TNPO1/transportin-1 (via HEAT repeats 8-12); the interaction is direct, mediates BAP1 nuclear localization and disrupts BAP1 homodimerization (PubMed:35446349). Interacts (via C-terminus) with KPNA1/importin alpha5 and KPNA2/importin alpha1; these interactions can contribute to BAP1 nuclear localization but are less important than the interaction with TNPO1/transportin-1 (PubMed:35446349). The interaction with TNPO1/transportin-1 disrupts homodimerization and blocks ubiquitination by UBE2O (PubMed:35446349).</text>
</comment>
<comment type="interaction">
    <interactant intactId="EBI-1791447">
        <id>Q92560</id>
    </interactant>
    <interactant intactId="EBI-1646500">
        <id>Q8IXJ9</id>
        <label>ASXL1</label>
    </interactant>
    <organismsDiffer>false</organismsDiffer>
    <experiments>9</experiments>
</comment>
<comment type="interaction">
    <interactant intactId="EBI-1791447">
        <id>Q92560</id>
    </interactant>
    <interactant intactId="EBI-349905">
        <id>P38398</id>
        <label>BRCA1</label>
    </interactant>
    <organismsDiffer>false</organismsDiffer>
    <experiments>3</experiments>
</comment>
<comment type="interaction">
    <interactant intactId="EBI-1791447">
        <id>Q92560</id>
    </interactant>
    <interactant intactId="EBI-2015072">
        <id>P38398-5</id>
        <label>BRCA1</label>
    </interactant>
    <organismsDiffer>false</organismsDiffer>
    <experiments>2</experiments>
</comment>
<comment type="interaction">
    <interactant intactId="EBI-1791447">
        <id>Q92560</id>
    </interactant>
    <interactant intactId="EBI-396176">
        <id>P51610</id>
        <label>HCFC1</label>
    </interactant>
    <organismsDiffer>false</organismsDiffer>
    <experiments>6</experiments>
</comment>
<comment type="interaction">
    <interactant intactId="EBI-1791447">
        <id>Q92560</id>
    </interactant>
    <interactant intactId="EBI-351055">
        <id>Q14573</id>
        <label>ITPR3</label>
    </interactant>
    <organismsDiffer>false</organismsDiffer>
    <experiments>12</experiments>
</comment>
<comment type="subcellular location">
    <subcellularLocation>
        <location evidence="8 10 11 20">Cytoplasm</location>
    </subcellularLocation>
    <subcellularLocation>
        <location evidence="8 10 11 20 21 27 30 31 35">Nucleus</location>
    </subcellularLocation>
    <subcellularLocation>
        <location evidence="27">Chromosome</location>
    </subcellularLocation>
    <text evidence="1 20 27 31">Mainly nuclear (PubMed:24703950, PubMed:30664650). Binds to chromatin (PubMed:30664650). Localizes to the cytoplasm when monoubiquitinated by the E2/E3 hybrid ubiquitin-protein ligase UBE2O (PubMed:24703950). Recruitment to chromatin is dependent on ASXL1/2/3 and recruitment to specific genes on FOXK1/2 (By similarity). Nuclear localization is redundantly mediated by the importin and transportin systems; TNPO1/transportin-1 is the major mediator of nuclear localization (PubMed:35446349).</text>
</comment>
<comment type="tissue specificity">
    <text evidence="29 35">Highly expressed in testis, placenta and ovary (PubMed:9528852). Expressed in breast (PubMed:9528852). levels in the placenta increase over the course of pregnancy (PubMed:34170818).</text>
</comment>
<comment type="developmental stage">
    <text evidence="29">Expressed in trophoblast stem cells during placenta development (at protein levels) (PubMed:34170818). Decreased expression levels correlate with epithelial-mesenchymal transition (EMT) during trophoblast cell differentiation (at protein level) (PubMed:34170818).</text>
</comment>
<comment type="domain">
    <text evidence="31">Possesses 2 overlapping nuclear localization sequences (NLS), a classic bipartite NLS and a non-classical PY-NLS (PubMed:35446349). The classical NLS probably mediates import via the importin alpha/beta system while the PY-NLS mediates nuclear import via the transportin system (PubMed:35446349).</text>
</comment>
<comment type="domain">
    <text evidence="26 33">The positively charged C-terminal tail stabilizes the interaction with nucleosomes/chromatosomes through interaction with the DNA backbone (PubMed:30258054, PubMed:36991118). Binding of ASXL1 just upstream of the positively charged C-terminal tail may stabilize its orientation to align the PR-DUB with its H2AK118ub1 substrate (PubMed:36991118).</text>
</comment>
<comment type="domain">
    <text evidence="33 34">The ubiquitin C-terminal hydrolase (UCH) domain, together with the DEUBAD domain of ASXL1, forms the ubiquitin binding cleft of the PR-DUB complex.</text>
</comment>
<comment type="domain">
    <text evidence="34">The positively charged Arg-finger motif mediates interaction with the histone H2A-H2B acidic patch; this interaction is critical for nucleosomal H2AK119ub1 deubiquitination activity but not nucleosomal binding.</text>
</comment>
<comment type="PTM">
    <text evidence="20 31">Ubiquitinated: monoubiquitinated at multiple sites within its nuclear localization signal (NLS) BY UBE2O, leading to cytoplasmic retention (PubMed:24703950). Able to mediate autodeubiquitination via intramolecular interactions to counteract cytoplasmic retention (PubMed:24703950). Monoubiquitinated on at least 4 sites near or within its PY-NLS (PubMed:35446349).</text>
</comment>
<comment type="disease" evidence="14 15">
    <disease id="DI-03213">
        <name>Mesothelioma, malignant</name>
        <acronym>MESOM</acronym>
        <description>An aggressive neoplasm of the serosal lining of the chest. It appears as broad sheets of cells, with some regions containing spindle-shaped, sarcoma-like cells and other regions showing adenomatous patterns. Pleural mesotheliomas have been linked to exposure to asbestos.</description>
        <dbReference type="MIM" id="156240"/>
    </disease>
    <text>The gene represented in this entry is involved in disease pathogenesis.</text>
</comment>
<comment type="disease" evidence="15 16 17 18">
    <disease id="DI-03304">
        <name>Tumor predisposition syndrome 1</name>
        <acronym>TPDS1</acronym>
        <description>An autosomal dominant condition characterized by predisposition to develop a variety of tumors, including benign melanocytic tumors as well as several malignant tumors, including uveal melanoma, cutaneous melanoma, malignant mesothelioma on exposure to asbestos, lung adenocarcinoma and meningioma.</description>
        <dbReference type="MIM" id="614327"/>
    </disease>
    <text>The disease is caused by variants affecting the gene represented in this entry.</text>
</comment>
<comment type="disease" evidence="24 28">
    <disease id="DI-06494">
        <name>Melanoma, uveal, 2</name>
        <acronym>UVM2</acronym>
        <description>Most common intraocular malignancy, arising from melanocytes in the iris, ciliary body, or choroid. Metastases develop in more than 30% of case patients, almost invariably in the liver, with poor prognosis.</description>
        <dbReference type="MIM" id="606661"/>
    </disease>
    <text>Disease susceptibility is associated with variants affecting the gene represented in this entry.</text>
</comment>
<comment type="disease" evidence="9 11 13 23 30">
    <disease id="DI-06353">
        <name>Kury-Isidor syndrome</name>
        <acronym>KURIS</acronym>
        <description>An autosomal dominant neurodevelopmental disorder characterized mainly by mild global developmental delay apparent from infancy or early childhood, and behavioral problems, including autism in most patients. Intellectual development may be mildly delayed, borderline, or even normal. Additional variable systemic features may include poor overall growth, hypotonia, distal skeletal anomalies, seizures, and non-specific dysmorphic facial features.</description>
        <dbReference type="MIM" id="619762"/>
    </disease>
    <text>The disease is caused by variants affecting the gene represented in this entry.</text>
</comment>
<comment type="miscellaneous">
    <text evidence="35">May act as a tumor suppressor.</text>
</comment>
<comment type="similarity">
    <text evidence="39">Belongs to the peptidase C12 family. BAP1 subfamily.</text>
</comment>
<comment type="caution">
    <text evidence="21 23">According to a report, interaction with FOXK2 is not dependent on phosphorylation of BAP1 (PubMed:24748658). However, it was later shown that phosphorylation at Thr-493 promotes interaction with FOXK2 (PubMed:25451922).</text>
</comment>
<comment type="sequence caution" evidence="39">
    <conflict type="erroneous initiation">
        <sequence resource="EMBL-CDS" id="BAA13401"/>
    </conflict>
    <text>Extended N-terminus.</text>
</comment>
<comment type="online information" name="Atlas of Genetics and Cytogenetics in Oncology and Haematology">
    <link uri="https://atlasgeneticsoncology.org/gene/755/BAP1"/>
</comment>
<keyword id="KW-0002">3D-structure</keyword>
<keyword id="KW-0156">Chromatin regulator</keyword>
<keyword id="KW-0158">Chromosome</keyword>
<keyword id="KW-0175">Coiled coil</keyword>
<keyword id="KW-0963">Cytoplasm</keyword>
<keyword id="KW-0217">Developmental protein</keyword>
<keyword id="KW-0221">Differentiation</keyword>
<keyword id="KW-0225">Disease variant</keyword>
<keyword id="KW-0378">Hydrolase</keyword>
<keyword id="KW-0991">Intellectual disability</keyword>
<keyword id="KW-0539">Nucleus</keyword>
<keyword id="KW-0597">Phosphoprotein</keyword>
<keyword id="KW-0645">Protease</keyword>
<keyword id="KW-1267">Proteomics identification</keyword>
<keyword id="KW-1185">Reference proteome</keyword>
<keyword id="KW-0788">Thiol protease</keyword>
<keyword id="KW-0832">Ubl conjugation</keyword>
<keyword id="KW-0833">Ubl conjugation pathway</keyword>
<dbReference type="EC" id="3.4.19.12" evidence="12 26 35"/>
<dbReference type="EMBL" id="AF045581">
    <property type="protein sequence ID" value="AAC15970.1"/>
    <property type="molecule type" value="mRNA"/>
</dbReference>
<dbReference type="EMBL" id="D88812">
    <property type="protein sequence ID" value="BAB46921.1"/>
    <property type="molecule type" value="mRNA"/>
</dbReference>
<dbReference type="EMBL" id="D87462">
    <property type="protein sequence ID" value="BAA13401.2"/>
    <property type="status" value="ALT_INIT"/>
    <property type="molecule type" value="mRNA"/>
</dbReference>
<dbReference type="EMBL" id="AK292608">
    <property type="protein sequence ID" value="BAF85297.1"/>
    <property type="molecule type" value="mRNA"/>
</dbReference>
<dbReference type="EMBL" id="CH471055">
    <property type="protein sequence ID" value="EAW65220.1"/>
    <property type="molecule type" value="Genomic_DNA"/>
</dbReference>
<dbReference type="EMBL" id="BC001596">
    <property type="protein sequence ID" value="AAH01596.1"/>
    <property type="molecule type" value="mRNA"/>
</dbReference>
<dbReference type="EMBL" id="AY130008">
    <property type="protein sequence ID" value="AAN05092.1"/>
    <property type="molecule type" value="mRNA"/>
</dbReference>
<dbReference type="CCDS" id="CCDS2853.1"/>
<dbReference type="RefSeq" id="NP_004647.1">
    <property type="nucleotide sequence ID" value="NM_004656.4"/>
</dbReference>
<dbReference type="PDB" id="7VPW">
    <property type="method" value="X-ray"/>
    <property type="resolution" value="3.76 A"/>
    <property type="chains" value="B=706-724"/>
</dbReference>
<dbReference type="PDB" id="8H1T">
    <property type="method" value="EM"/>
    <property type="resolution" value="3.00 A"/>
    <property type="chains" value="L=1-729"/>
</dbReference>
<dbReference type="PDB" id="8SVF">
    <property type="method" value="EM"/>
    <property type="resolution" value="3.20 A"/>
    <property type="chains" value="K=1-729"/>
</dbReference>
<dbReference type="PDBsum" id="7VPW"/>
<dbReference type="PDBsum" id="8H1T"/>
<dbReference type="PDBsum" id="8SVF"/>
<dbReference type="EMDB" id="EMD-34431"/>
<dbReference type="EMDB" id="EMD-40789"/>
<dbReference type="SMR" id="Q92560"/>
<dbReference type="BioGRID" id="113911">
    <property type="interactions" value="1323"/>
</dbReference>
<dbReference type="ComplexPortal" id="CPX-414">
    <property type="entry name" value="PR-DUB complex"/>
</dbReference>
<dbReference type="CORUM" id="Q92560"/>
<dbReference type="DIP" id="DIP-47004N"/>
<dbReference type="FunCoup" id="Q92560">
    <property type="interactions" value="3418"/>
</dbReference>
<dbReference type="IntAct" id="Q92560">
    <property type="interactions" value="99"/>
</dbReference>
<dbReference type="MINT" id="Q92560"/>
<dbReference type="STRING" id="9606.ENSP00000417132"/>
<dbReference type="BindingDB" id="Q92560"/>
<dbReference type="ChEMBL" id="CHEMBL1293314"/>
<dbReference type="MEROPS" id="C12.004"/>
<dbReference type="GlyGen" id="Q92560">
    <property type="glycosylation" value="2 sites, 1 O-linked glycan (1 site)"/>
</dbReference>
<dbReference type="iPTMnet" id="Q92560"/>
<dbReference type="MetOSite" id="Q92560"/>
<dbReference type="PhosphoSitePlus" id="Q92560"/>
<dbReference type="BioMuta" id="BAP1"/>
<dbReference type="DMDM" id="68565074"/>
<dbReference type="jPOST" id="Q92560"/>
<dbReference type="MassIVE" id="Q92560"/>
<dbReference type="PaxDb" id="9606-ENSP00000417132"/>
<dbReference type="PeptideAtlas" id="Q92560"/>
<dbReference type="ProteomicsDB" id="75316"/>
<dbReference type="Pumba" id="Q92560"/>
<dbReference type="Antibodypedia" id="3812">
    <property type="antibodies" value="489 antibodies from 38 providers"/>
</dbReference>
<dbReference type="DNASU" id="8314"/>
<dbReference type="Ensembl" id="ENST00000460680.6">
    <property type="protein sequence ID" value="ENSP00000417132.1"/>
    <property type="gene ID" value="ENSG00000163930.10"/>
</dbReference>
<dbReference type="GeneID" id="8314"/>
<dbReference type="KEGG" id="hsa:8314"/>
<dbReference type="MANE-Select" id="ENST00000460680.6">
    <property type="protein sequence ID" value="ENSP00000417132.1"/>
    <property type="RefSeq nucleotide sequence ID" value="NM_004656.4"/>
    <property type="RefSeq protein sequence ID" value="NP_004647.1"/>
</dbReference>
<dbReference type="UCSC" id="uc003ddx.5">
    <property type="organism name" value="human"/>
</dbReference>
<dbReference type="AGR" id="HGNC:950"/>
<dbReference type="CTD" id="8314"/>
<dbReference type="DisGeNET" id="8314"/>
<dbReference type="GeneCards" id="BAP1"/>
<dbReference type="GeneReviews" id="BAP1"/>
<dbReference type="HGNC" id="HGNC:950">
    <property type="gene designation" value="BAP1"/>
</dbReference>
<dbReference type="HPA" id="ENSG00000163930">
    <property type="expression patterns" value="Low tissue specificity"/>
</dbReference>
<dbReference type="MalaCards" id="BAP1"/>
<dbReference type="MIM" id="156240">
    <property type="type" value="phenotype"/>
</dbReference>
<dbReference type="MIM" id="603089">
    <property type="type" value="gene"/>
</dbReference>
<dbReference type="MIM" id="606661">
    <property type="type" value="phenotype"/>
</dbReference>
<dbReference type="MIM" id="614327">
    <property type="type" value="phenotype"/>
</dbReference>
<dbReference type="MIM" id="619762">
    <property type="type" value="phenotype"/>
</dbReference>
<dbReference type="neXtProt" id="NX_Q92560"/>
<dbReference type="OpenTargets" id="ENSG00000163930"/>
<dbReference type="Orphanet" id="289539">
    <property type="disease" value="BAP1-related tumor predisposition syndrome"/>
</dbReference>
<dbReference type="Orphanet" id="618">
    <property type="disease" value="Familial melanoma"/>
</dbReference>
<dbReference type="Orphanet" id="2495">
    <property type="disease" value="Meningioma"/>
</dbReference>
<dbReference type="Orphanet" id="528084">
    <property type="disease" value="Non-specific syndromic intellectual disability"/>
</dbReference>
<dbReference type="Orphanet" id="50251">
    <property type="disease" value="Pleural mesothelioma"/>
</dbReference>
<dbReference type="Orphanet" id="39044">
    <property type="disease" value="Uveal melanoma"/>
</dbReference>
<dbReference type="PharmGKB" id="PA25254"/>
<dbReference type="VEuPathDB" id="HostDB:ENSG00000163930"/>
<dbReference type="eggNOG" id="KOG2778">
    <property type="taxonomic scope" value="Eukaryota"/>
</dbReference>
<dbReference type="GeneTree" id="ENSGT00940000156388"/>
<dbReference type="HOGENOM" id="CLU_018316_5_0_1"/>
<dbReference type="InParanoid" id="Q92560"/>
<dbReference type="OMA" id="RIAYEQK"/>
<dbReference type="OrthoDB" id="1924260at2759"/>
<dbReference type="PAN-GO" id="Q92560">
    <property type="GO annotations" value="3 GO annotations based on evolutionary models"/>
</dbReference>
<dbReference type="PhylomeDB" id="Q92560"/>
<dbReference type="TreeFam" id="TF313976"/>
<dbReference type="BRENDA" id="3.4.19.12">
    <property type="organism ID" value="2681"/>
</dbReference>
<dbReference type="PathwayCommons" id="Q92560"/>
<dbReference type="Reactome" id="R-HSA-5689603">
    <property type="pathway name" value="UCH proteinases"/>
</dbReference>
<dbReference type="Reactome" id="R-HSA-5693565">
    <property type="pathway name" value="Recruitment and ATM-mediated phosphorylation of repair and signaling proteins at DNA double strand breaks"/>
</dbReference>
<dbReference type="SignaLink" id="Q92560"/>
<dbReference type="SIGNOR" id="Q92560"/>
<dbReference type="BioGRID-ORCS" id="8314">
    <property type="hits" value="488 hits in 1221 CRISPR screens"/>
</dbReference>
<dbReference type="ChiTaRS" id="BAP1">
    <property type="organism name" value="human"/>
</dbReference>
<dbReference type="GeneWiki" id="BAP1"/>
<dbReference type="GenomeRNAi" id="8314"/>
<dbReference type="Pharos" id="Q92560">
    <property type="development level" value="Tbio"/>
</dbReference>
<dbReference type="PRO" id="PR:Q92560"/>
<dbReference type="Proteomes" id="UP000005640">
    <property type="component" value="Chromosome 3"/>
</dbReference>
<dbReference type="RNAct" id="Q92560">
    <property type="molecule type" value="protein"/>
</dbReference>
<dbReference type="Bgee" id="ENSG00000163930">
    <property type="expression patterns" value="Expressed in left testis and 164 other cell types or tissues"/>
</dbReference>
<dbReference type="ExpressionAtlas" id="Q92560">
    <property type="expression patterns" value="baseline and differential"/>
</dbReference>
<dbReference type="GO" id="GO:0005694">
    <property type="term" value="C:chromosome"/>
    <property type="evidence" value="ECO:0007669"/>
    <property type="project" value="UniProtKB-SubCell"/>
</dbReference>
<dbReference type="GO" id="GO:0005737">
    <property type="term" value="C:cytoplasm"/>
    <property type="evidence" value="ECO:0000314"/>
    <property type="project" value="UniProtKB"/>
</dbReference>
<dbReference type="GO" id="GO:0005829">
    <property type="term" value="C:cytosol"/>
    <property type="evidence" value="ECO:0000314"/>
    <property type="project" value="HPA"/>
</dbReference>
<dbReference type="GO" id="GO:0005654">
    <property type="term" value="C:nucleoplasm"/>
    <property type="evidence" value="ECO:0000314"/>
    <property type="project" value="HPA"/>
</dbReference>
<dbReference type="GO" id="GO:0005634">
    <property type="term" value="C:nucleus"/>
    <property type="evidence" value="ECO:0000314"/>
    <property type="project" value="UniProtKB"/>
</dbReference>
<dbReference type="GO" id="GO:0035517">
    <property type="term" value="C:PR-DUB complex"/>
    <property type="evidence" value="ECO:0000314"/>
    <property type="project" value="UniProtKB"/>
</dbReference>
<dbReference type="GO" id="GO:0003682">
    <property type="term" value="F:chromatin binding"/>
    <property type="evidence" value="ECO:0000314"/>
    <property type="project" value="UniProtKB"/>
</dbReference>
<dbReference type="GO" id="GO:0031490">
    <property type="term" value="F:chromatin DNA binding"/>
    <property type="evidence" value="ECO:0007669"/>
    <property type="project" value="Ensembl"/>
</dbReference>
<dbReference type="GO" id="GO:0004843">
    <property type="term" value="F:cysteine-type deubiquitinase activity"/>
    <property type="evidence" value="ECO:0000314"/>
    <property type="project" value="UniProtKB"/>
</dbReference>
<dbReference type="GO" id="GO:0140950">
    <property type="term" value="F:histone H2A deubiquitinase activity"/>
    <property type="evidence" value="ECO:0000315"/>
    <property type="project" value="UniProtKB"/>
</dbReference>
<dbReference type="GO" id="GO:0008233">
    <property type="term" value="F:peptidase activity"/>
    <property type="evidence" value="ECO:0000303"/>
    <property type="project" value="UniProtKB"/>
</dbReference>
<dbReference type="GO" id="GO:0035726">
    <property type="term" value="P:common myeloid progenitor cell proliferation"/>
    <property type="evidence" value="ECO:0007669"/>
    <property type="project" value="Ensembl"/>
</dbReference>
<dbReference type="GO" id="GO:0043249">
    <property type="term" value="P:erythrocyte maturation"/>
    <property type="evidence" value="ECO:0007669"/>
    <property type="project" value="Ensembl"/>
</dbReference>
<dbReference type="GO" id="GO:0010467">
    <property type="term" value="P:gene expression"/>
    <property type="evidence" value="ECO:0007669"/>
    <property type="project" value="Ensembl"/>
</dbReference>
<dbReference type="GO" id="GO:0061484">
    <property type="term" value="P:hematopoietic stem cell homeostasis"/>
    <property type="evidence" value="ECO:0007669"/>
    <property type="project" value="Ensembl"/>
</dbReference>
<dbReference type="GO" id="GO:0031507">
    <property type="term" value="P:heterochromatin formation"/>
    <property type="evidence" value="ECO:0000318"/>
    <property type="project" value="GO_Central"/>
</dbReference>
<dbReference type="GO" id="GO:0001701">
    <property type="term" value="P:in utero embryonic development"/>
    <property type="evidence" value="ECO:0007669"/>
    <property type="project" value="Ensembl"/>
</dbReference>
<dbReference type="GO" id="GO:0070661">
    <property type="term" value="P:leukocyte proliferation"/>
    <property type="evidence" value="ECO:0007669"/>
    <property type="project" value="Ensembl"/>
</dbReference>
<dbReference type="GO" id="GO:0061519">
    <property type="term" value="P:macrophage homeostasis"/>
    <property type="evidence" value="ECO:0007669"/>
    <property type="project" value="Ensembl"/>
</dbReference>
<dbReference type="GO" id="GO:0000278">
    <property type="term" value="P:mitotic cell cycle"/>
    <property type="evidence" value="ECO:0007669"/>
    <property type="project" value="Ensembl"/>
</dbReference>
<dbReference type="GO" id="GO:0035520">
    <property type="term" value="P:monoubiquitinated protein deubiquitination"/>
    <property type="evidence" value="ECO:0000314"/>
    <property type="project" value="UniProtKB"/>
</dbReference>
<dbReference type="GO" id="GO:0033028">
    <property type="term" value="P:myeloid cell apoptotic process"/>
    <property type="evidence" value="ECO:0007669"/>
    <property type="project" value="Ensembl"/>
</dbReference>
<dbReference type="GO" id="GO:0008285">
    <property type="term" value="P:negative regulation of cell population proliferation"/>
    <property type="evidence" value="ECO:0000304"/>
    <property type="project" value="ProtInc"/>
</dbReference>
<dbReference type="GO" id="GO:0045892">
    <property type="term" value="P:negative regulation of DNA-templated transcription"/>
    <property type="evidence" value="ECO:0000314"/>
    <property type="project" value="UniProtKB"/>
</dbReference>
<dbReference type="GO" id="GO:0070050">
    <property type="term" value="P:neuron cellular homeostasis"/>
    <property type="evidence" value="ECO:0007669"/>
    <property type="project" value="Ensembl"/>
</dbReference>
<dbReference type="GO" id="GO:0030223">
    <property type="term" value="P:neutrophil differentiation"/>
    <property type="evidence" value="ECO:0007669"/>
    <property type="project" value="Ensembl"/>
</dbReference>
<dbReference type="GO" id="GO:0043363">
    <property type="term" value="P:nucleate erythrocyte differentiation"/>
    <property type="evidence" value="ECO:0007669"/>
    <property type="project" value="Ensembl"/>
</dbReference>
<dbReference type="GO" id="GO:0036344">
    <property type="term" value="P:platelet morphogenesis"/>
    <property type="evidence" value="ECO:0007669"/>
    <property type="project" value="Ensembl"/>
</dbReference>
<dbReference type="GO" id="GO:1903955">
    <property type="term" value="P:positive regulation of protein targeting to mitochondrion"/>
    <property type="evidence" value="ECO:0007001"/>
    <property type="project" value="ParkinsonsUK-UCL"/>
</dbReference>
<dbReference type="GO" id="GO:0016579">
    <property type="term" value="P:protein deubiquitination"/>
    <property type="evidence" value="ECO:0000314"/>
    <property type="project" value="UniProtKB"/>
</dbReference>
<dbReference type="GO" id="GO:0071108">
    <property type="term" value="P:protein K48-linked deubiquitination"/>
    <property type="evidence" value="ECO:0000315"/>
    <property type="project" value="UniProtKB"/>
</dbReference>
<dbReference type="GO" id="GO:0036211">
    <property type="term" value="P:protein modification process"/>
    <property type="evidence" value="ECO:0000303"/>
    <property type="project" value="UniProtKB"/>
</dbReference>
<dbReference type="GO" id="GO:0051726">
    <property type="term" value="P:regulation of cell cycle"/>
    <property type="evidence" value="ECO:0000315"/>
    <property type="project" value="UniProtKB"/>
</dbReference>
<dbReference type="GO" id="GO:0001558">
    <property type="term" value="P:regulation of cell growth"/>
    <property type="evidence" value="ECO:0000315"/>
    <property type="project" value="UniProtKB"/>
</dbReference>
<dbReference type="GO" id="GO:1900015">
    <property type="term" value="P:regulation of cytokine production involved in inflammatory response"/>
    <property type="evidence" value="ECO:0007669"/>
    <property type="project" value="Ensembl"/>
</dbReference>
<dbReference type="GO" id="GO:0050727">
    <property type="term" value="P:regulation of inflammatory response"/>
    <property type="evidence" value="ECO:0007669"/>
    <property type="project" value="Ensembl"/>
</dbReference>
<dbReference type="GO" id="GO:0002574">
    <property type="term" value="P:thrombocyte differentiation"/>
    <property type="evidence" value="ECO:0007669"/>
    <property type="project" value="Ensembl"/>
</dbReference>
<dbReference type="GO" id="GO:0001894">
    <property type="term" value="P:tissue homeostasis"/>
    <property type="evidence" value="ECO:0007669"/>
    <property type="project" value="Ensembl"/>
</dbReference>
<dbReference type="GO" id="GO:0006511">
    <property type="term" value="P:ubiquitin-dependent protein catabolic process"/>
    <property type="evidence" value="ECO:0007669"/>
    <property type="project" value="InterPro"/>
</dbReference>
<dbReference type="CDD" id="cd09617">
    <property type="entry name" value="Peptidase_C12_UCH37_BAP1"/>
    <property type="match status" value="1"/>
</dbReference>
<dbReference type="FunFam" id="1.20.58.860:FF:000002">
    <property type="entry name" value="Ubiquitin carboxyl-terminal hydrolase"/>
    <property type="match status" value="1"/>
</dbReference>
<dbReference type="FunFam" id="3.40.532.10:FF:000002">
    <property type="entry name" value="Ubiquitin carboxyl-terminal hydrolase"/>
    <property type="match status" value="1"/>
</dbReference>
<dbReference type="Gene3D" id="1.20.58.860">
    <property type="match status" value="1"/>
</dbReference>
<dbReference type="Gene3D" id="3.40.532.10">
    <property type="entry name" value="Peptidase C12, ubiquitin carboxyl-terminal hydrolase"/>
    <property type="match status" value="1"/>
</dbReference>
<dbReference type="InterPro" id="IPR038765">
    <property type="entry name" value="Papain-like_cys_pep_sf"/>
</dbReference>
<dbReference type="InterPro" id="IPR001578">
    <property type="entry name" value="Peptidase_C12_UCH"/>
</dbReference>
<dbReference type="InterPro" id="IPR036959">
    <property type="entry name" value="Peptidase_C12_UCH_sf"/>
</dbReference>
<dbReference type="InterPro" id="IPR041507">
    <property type="entry name" value="UCH_C"/>
</dbReference>
<dbReference type="PANTHER" id="PTHR10589">
    <property type="entry name" value="UBIQUITIN CARBOXYL-TERMINAL HYDROLASE"/>
    <property type="match status" value="1"/>
</dbReference>
<dbReference type="PANTHER" id="PTHR10589:SF28">
    <property type="entry name" value="UBIQUITIN CARBOXYL-TERMINAL HYDROLASE BAP1"/>
    <property type="match status" value="1"/>
</dbReference>
<dbReference type="Pfam" id="PF01088">
    <property type="entry name" value="Peptidase_C12"/>
    <property type="match status" value="1"/>
</dbReference>
<dbReference type="Pfam" id="PF18031">
    <property type="entry name" value="UCH_C"/>
    <property type="match status" value="1"/>
</dbReference>
<dbReference type="PRINTS" id="PR00707">
    <property type="entry name" value="UBCTHYDRLASE"/>
</dbReference>
<dbReference type="SUPFAM" id="SSF54001">
    <property type="entry name" value="Cysteine proteinases"/>
    <property type="match status" value="1"/>
</dbReference>
<dbReference type="PROSITE" id="PS52048">
    <property type="entry name" value="UCH_DOMAIN"/>
    <property type="match status" value="1"/>
</dbReference>
<dbReference type="PROSITE" id="PS52049">
    <property type="entry name" value="ULD"/>
    <property type="match status" value="1"/>
</dbReference>
<gene>
    <name evidence="37 41" type="primary">BAP1</name>
    <name evidence="36" type="synonym">KIAA0272</name>
    <name evidence="38" type="ORF">hucep-6</name>
</gene>
<reference key="1">
    <citation type="journal article" date="1998" name="Oncogene">
        <title>BAP1: a novel ubiquitin hydrolase which binds to the BRCA1 RING finger and enhances BRCA1-mediated cell growth suppression.</title>
        <authorList>
            <person name="Jensen D.E."/>
            <person name="Proctor M."/>
            <person name="Marquis S.T."/>
            <person name="Gardner H.P."/>
            <person name="Ha S.I."/>
            <person name="Chodosh L.A."/>
            <person name="Ishov A.M."/>
            <person name="Tommerup N."/>
            <person name="Vissing H."/>
            <person name="Sekido Y."/>
            <person name="Minna J."/>
            <person name="Borodovsky A."/>
            <person name="Schultz D.C."/>
            <person name="Wilkinson K.D."/>
            <person name="Maul G.G."/>
            <person name="Barlev N."/>
            <person name="Berger S."/>
            <person name="Prendergast G.C."/>
            <person name="Rauscher F.J. III"/>
        </authorList>
    </citation>
    <scope>NUCLEOTIDE SEQUENCE [MRNA]</scope>
    <scope>ENZYME ACTIVITY</scope>
    <scope>MUTAGENESIS OF CYS-91 AND LEU-691</scope>
    <scope>INTERACTION WITH BRCA1</scope>
    <scope>TISSUE SPECIFICITY</scope>
    <scope>SUBCELLULAR LOCATION</scope>
    <scope>MISCELLANEOUS</scope>
    <source>
        <tissue>B-cell</tissue>
    </source>
</reference>
<reference key="2">
    <citation type="submission" date="1996-11" db="EMBL/GenBank/DDBJ databases">
        <title>Biological functions of a novel human gene, hucep-6, which is specifically expressed in the central nervous system.</title>
        <authorList>
            <person name="Yoshimoto M."/>
            <person name="Yazaki M."/>
            <person name="Takayama K."/>
            <person name="Matsumoto K."/>
        </authorList>
    </citation>
    <scope>NUCLEOTIDE SEQUENCE [MRNA]</scope>
    <source>
        <tissue>Brain</tissue>
    </source>
</reference>
<reference key="3">
    <citation type="journal article" date="1996" name="DNA Res.">
        <title>Prediction of the coding sequences of unidentified human genes. VI. The coding sequences of 80 new genes (KIAA0201-KIAA0280) deduced by analysis of cDNA clones from cell line KG-1 and brain.</title>
        <authorList>
            <person name="Nagase T."/>
            <person name="Seki N."/>
            <person name="Ishikawa K."/>
            <person name="Ohira M."/>
            <person name="Kawarabayasi Y."/>
            <person name="Ohara O."/>
            <person name="Tanaka A."/>
            <person name="Kotani H."/>
            <person name="Miyajima N."/>
            <person name="Nomura N."/>
        </authorList>
    </citation>
    <scope>NUCLEOTIDE SEQUENCE [LARGE SCALE MRNA]</scope>
    <source>
        <tissue>Brain</tissue>
    </source>
</reference>
<reference key="4">
    <citation type="journal article" date="2002" name="DNA Res.">
        <title>Construction of expression-ready cDNA clones for KIAA genes: manual curation of 330 KIAA cDNA clones.</title>
        <authorList>
            <person name="Nakajima D."/>
            <person name="Okazaki N."/>
            <person name="Yamakawa H."/>
            <person name="Kikuno R."/>
            <person name="Ohara O."/>
            <person name="Nagase T."/>
        </authorList>
    </citation>
    <scope>SEQUENCE REVISION</scope>
</reference>
<reference key="5">
    <citation type="journal article" date="2004" name="Nat. Genet.">
        <title>Complete sequencing and characterization of 21,243 full-length human cDNAs.</title>
        <authorList>
            <person name="Ota T."/>
            <person name="Suzuki Y."/>
            <person name="Nishikawa T."/>
            <person name="Otsuki T."/>
            <person name="Sugiyama T."/>
            <person name="Irie R."/>
            <person name="Wakamatsu A."/>
            <person name="Hayashi K."/>
            <person name="Sato H."/>
            <person name="Nagai K."/>
            <person name="Kimura K."/>
            <person name="Makita H."/>
            <person name="Sekine M."/>
            <person name="Obayashi M."/>
            <person name="Nishi T."/>
            <person name="Shibahara T."/>
            <person name="Tanaka T."/>
            <person name="Ishii S."/>
            <person name="Yamamoto J."/>
            <person name="Saito K."/>
            <person name="Kawai Y."/>
            <person name="Isono Y."/>
            <person name="Nakamura Y."/>
            <person name="Nagahari K."/>
            <person name="Murakami K."/>
            <person name="Yasuda T."/>
            <person name="Iwayanagi T."/>
            <person name="Wagatsuma M."/>
            <person name="Shiratori A."/>
            <person name="Sudo H."/>
            <person name="Hosoiri T."/>
            <person name="Kaku Y."/>
            <person name="Kodaira H."/>
            <person name="Kondo H."/>
            <person name="Sugawara M."/>
            <person name="Takahashi M."/>
            <person name="Kanda K."/>
            <person name="Yokoi T."/>
            <person name="Furuya T."/>
            <person name="Kikkawa E."/>
            <person name="Omura Y."/>
            <person name="Abe K."/>
            <person name="Kamihara K."/>
            <person name="Katsuta N."/>
            <person name="Sato K."/>
            <person name="Tanikawa M."/>
            <person name="Yamazaki M."/>
            <person name="Ninomiya K."/>
            <person name="Ishibashi T."/>
            <person name="Yamashita H."/>
            <person name="Murakawa K."/>
            <person name="Fujimori K."/>
            <person name="Tanai H."/>
            <person name="Kimata M."/>
            <person name="Watanabe M."/>
            <person name="Hiraoka S."/>
            <person name="Chiba Y."/>
            <person name="Ishida S."/>
            <person name="Ono Y."/>
            <person name="Takiguchi S."/>
            <person name="Watanabe S."/>
            <person name="Yosida M."/>
            <person name="Hotuta T."/>
            <person name="Kusano J."/>
            <person name="Kanehori K."/>
            <person name="Takahashi-Fujii A."/>
            <person name="Hara H."/>
            <person name="Tanase T.-O."/>
            <person name="Nomura Y."/>
            <person name="Togiya S."/>
            <person name="Komai F."/>
            <person name="Hara R."/>
            <person name="Takeuchi K."/>
            <person name="Arita M."/>
            <person name="Imose N."/>
            <person name="Musashino K."/>
            <person name="Yuuki H."/>
            <person name="Oshima A."/>
            <person name="Sasaki N."/>
            <person name="Aotsuka S."/>
            <person name="Yoshikawa Y."/>
            <person name="Matsunawa H."/>
            <person name="Ichihara T."/>
            <person name="Shiohata N."/>
            <person name="Sano S."/>
            <person name="Moriya S."/>
            <person name="Momiyama H."/>
            <person name="Satoh N."/>
            <person name="Takami S."/>
            <person name="Terashima Y."/>
            <person name="Suzuki O."/>
            <person name="Nakagawa S."/>
            <person name="Senoh A."/>
            <person name="Mizoguchi H."/>
            <person name="Goto Y."/>
            <person name="Shimizu F."/>
            <person name="Wakebe H."/>
            <person name="Hishigaki H."/>
            <person name="Watanabe T."/>
            <person name="Sugiyama A."/>
            <person name="Takemoto M."/>
            <person name="Kawakami B."/>
            <person name="Yamazaki M."/>
            <person name="Watanabe K."/>
            <person name="Kumagai A."/>
            <person name="Itakura S."/>
            <person name="Fukuzumi Y."/>
            <person name="Fujimori Y."/>
            <person name="Komiyama M."/>
            <person name="Tashiro H."/>
            <person name="Tanigami A."/>
            <person name="Fujiwara T."/>
            <person name="Ono T."/>
            <person name="Yamada K."/>
            <person name="Fujii Y."/>
            <person name="Ozaki K."/>
            <person name="Hirao M."/>
            <person name="Ohmori Y."/>
            <person name="Kawabata A."/>
            <person name="Hikiji T."/>
            <person name="Kobatake N."/>
            <person name="Inagaki H."/>
            <person name="Ikema Y."/>
            <person name="Okamoto S."/>
            <person name="Okitani R."/>
            <person name="Kawakami T."/>
            <person name="Noguchi S."/>
            <person name="Itoh T."/>
            <person name="Shigeta K."/>
            <person name="Senba T."/>
            <person name="Matsumura K."/>
            <person name="Nakajima Y."/>
            <person name="Mizuno T."/>
            <person name="Morinaga M."/>
            <person name="Sasaki M."/>
            <person name="Togashi T."/>
            <person name="Oyama M."/>
            <person name="Hata H."/>
            <person name="Watanabe M."/>
            <person name="Komatsu T."/>
            <person name="Mizushima-Sugano J."/>
            <person name="Satoh T."/>
            <person name="Shirai Y."/>
            <person name="Takahashi Y."/>
            <person name="Nakagawa K."/>
            <person name="Okumura K."/>
            <person name="Nagase T."/>
            <person name="Nomura N."/>
            <person name="Kikuchi H."/>
            <person name="Masuho Y."/>
            <person name="Yamashita R."/>
            <person name="Nakai K."/>
            <person name="Yada T."/>
            <person name="Nakamura Y."/>
            <person name="Ohara O."/>
            <person name="Isogai T."/>
            <person name="Sugano S."/>
        </authorList>
    </citation>
    <scope>NUCLEOTIDE SEQUENCE [LARGE SCALE MRNA]</scope>
    <source>
        <tissue>Testis</tissue>
    </source>
</reference>
<reference key="6">
    <citation type="submission" date="2005-07" db="EMBL/GenBank/DDBJ databases">
        <authorList>
            <person name="Mural R.J."/>
            <person name="Istrail S."/>
            <person name="Sutton G.G."/>
            <person name="Florea L."/>
            <person name="Halpern A.L."/>
            <person name="Mobarry C.M."/>
            <person name="Lippert R."/>
            <person name="Walenz B."/>
            <person name="Shatkay H."/>
            <person name="Dew I."/>
            <person name="Miller J.R."/>
            <person name="Flanigan M.J."/>
            <person name="Edwards N.J."/>
            <person name="Bolanos R."/>
            <person name="Fasulo D."/>
            <person name="Halldorsson B.V."/>
            <person name="Hannenhalli S."/>
            <person name="Turner R."/>
            <person name="Yooseph S."/>
            <person name="Lu F."/>
            <person name="Nusskern D.R."/>
            <person name="Shue B.C."/>
            <person name="Zheng X.H."/>
            <person name="Zhong F."/>
            <person name="Delcher A.L."/>
            <person name="Huson D.H."/>
            <person name="Kravitz S.A."/>
            <person name="Mouchard L."/>
            <person name="Reinert K."/>
            <person name="Remington K.A."/>
            <person name="Clark A.G."/>
            <person name="Waterman M.S."/>
            <person name="Eichler E.E."/>
            <person name="Adams M.D."/>
            <person name="Hunkapiller M.W."/>
            <person name="Myers E.W."/>
            <person name="Venter J.C."/>
        </authorList>
    </citation>
    <scope>NUCLEOTIDE SEQUENCE [LARGE SCALE GENOMIC DNA]</scope>
</reference>
<reference key="7">
    <citation type="journal article" date="2004" name="Genome Res.">
        <title>The status, quality, and expansion of the NIH full-length cDNA project: the Mammalian Gene Collection (MGC).</title>
        <authorList>
            <consortium name="The MGC Project Team"/>
        </authorList>
    </citation>
    <scope>NUCLEOTIDE SEQUENCE [LARGE SCALE MRNA]</scope>
    <source>
        <tissue>Skin</tissue>
    </source>
</reference>
<reference key="8">
    <citation type="journal article" date="2003" name="Int. J. Cancer">
        <title>Novel tumor antigens identified by autologous antibody screening of childhood medulloblastoma cDNA libraries.</title>
        <authorList>
            <person name="Behrends U."/>
            <person name="Schneider I."/>
            <person name="Roessler S."/>
            <person name="Frauenknecht H."/>
            <person name="Golbeck A."/>
            <person name="Lechner B."/>
            <person name="Eigenstetter G."/>
            <person name="Zobywalski C."/>
            <person name="Mueller-Weihrich S."/>
            <person name="Graubner U."/>
            <person name="Schmid I."/>
            <person name="Sackerer D."/>
            <person name="Spaeth M."/>
            <person name="Goetz C."/>
            <person name="Prantl F."/>
            <person name="Asmuss H.-P."/>
            <person name="Bise K."/>
            <person name="Mautner J."/>
        </authorList>
    </citation>
    <scope>NUCLEOTIDE SEQUENCE [MRNA] OF 164-729</scope>
    <source>
        <tissue>Medulloblastoma</tissue>
    </source>
</reference>
<reference key="9">
    <citation type="journal article" date="2008" name="J. Proteome Res.">
        <title>Combining protein-based IMAC, peptide-based IMAC, and MudPIT for efficient phosphoproteomic analysis.</title>
        <authorList>
            <person name="Cantin G.T."/>
            <person name="Yi W."/>
            <person name="Lu B."/>
            <person name="Park S.K."/>
            <person name="Xu T."/>
            <person name="Lee J.-D."/>
            <person name="Yates J.R. III"/>
        </authorList>
    </citation>
    <scope>IDENTIFICATION BY MASS SPECTROMETRY [LARGE SCALE ANALYSIS]</scope>
    <source>
        <tissue>Cervix carcinoma</tissue>
    </source>
</reference>
<reference key="10">
    <citation type="journal article" date="2008" name="Proc. Natl. Acad. Sci. U.S.A.">
        <title>A quantitative atlas of mitotic phosphorylation.</title>
        <authorList>
            <person name="Dephoure N."/>
            <person name="Zhou C."/>
            <person name="Villen J."/>
            <person name="Beausoleil S.A."/>
            <person name="Bakalarski C.E."/>
            <person name="Elledge S.J."/>
            <person name="Gygi S.P."/>
        </authorList>
    </citation>
    <scope>IDENTIFICATION BY MASS SPECTROMETRY [LARGE SCALE ANALYSIS]</scope>
    <source>
        <tissue>Cervix carcinoma</tissue>
    </source>
</reference>
<reference key="11">
    <citation type="journal article" date="2009" name="Anal. Chem.">
        <title>Lys-N and trypsin cover complementary parts of the phosphoproteome in a refined SCX-based approach.</title>
        <authorList>
            <person name="Gauci S."/>
            <person name="Helbig A.O."/>
            <person name="Slijper M."/>
            <person name="Krijgsveld J."/>
            <person name="Heck A.J."/>
            <person name="Mohammed S."/>
        </authorList>
    </citation>
    <scope>IDENTIFICATION BY MASS SPECTROMETRY [LARGE SCALE ANALYSIS]</scope>
</reference>
<reference key="12">
    <citation type="journal article" date="2009" name="Sci. Signal.">
        <title>Quantitative phosphoproteomic analysis of T cell receptor signaling reveals system-wide modulation of protein-protein interactions.</title>
        <authorList>
            <person name="Mayya V."/>
            <person name="Lundgren D.H."/>
            <person name="Hwang S.-I."/>
            <person name="Rezaul K."/>
            <person name="Wu L."/>
            <person name="Eng J.K."/>
            <person name="Rodionov V."/>
            <person name="Han D.K."/>
        </authorList>
    </citation>
    <scope>IDENTIFICATION BY MASS SPECTROMETRY [LARGE SCALE ANALYSIS]</scope>
    <source>
        <tissue>Leukemic T-cell</tissue>
    </source>
</reference>
<reference key="13">
    <citation type="journal article" date="2013" name="J. Proteome Res.">
        <title>Toward a comprehensive characterization of a human cancer cell phosphoproteome.</title>
        <authorList>
            <person name="Zhou H."/>
            <person name="Di Palma S."/>
            <person name="Preisinger C."/>
            <person name="Peng M."/>
            <person name="Polat A.N."/>
            <person name="Heck A.J."/>
            <person name="Mohammed S."/>
        </authorList>
    </citation>
    <scope>PHOSPHORYLATION [LARGE SCALE ANALYSIS] AT SER-292; SER-369; SER-521; SER-537; SER-585 AND SER-597</scope>
    <scope>IDENTIFICATION BY MASS SPECTROMETRY [LARGE SCALE ANALYSIS]</scope>
    <source>
        <tissue>Cervix carcinoma</tissue>
        <tissue>Erythroleukemia</tissue>
    </source>
</reference>
<reference key="14">
    <citation type="journal article" date="2014" name="J. Proteomics">
        <title>An enzyme assisted RP-RPLC approach for in-depth analysis of human liver phosphoproteome.</title>
        <authorList>
            <person name="Bian Y."/>
            <person name="Song C."/>
            <person name="Cheng K."/>
            <person name="Dong M."/>
            <person name="Wang F."/>
            <person name="Huang J."/>
            <person name="Sun D."/>
            <person name="Wang L."/>
            <person name="Ye M."/>
            <person name="Zou H."/>
        </authorList>
    </citation>
    <scope>IDENTIFICATION BY MASS SPECTROMETRY [LARGE SCALE ANALYSIS]</scope>
    <source>
        <tissue>Liver</tissue>
    </source>
</reference>
<reference key="15">
    <citation type="journal article" date="1999" name="Cancer Lett.">
        <title>Defining biochemical functions for the BRCA1 tumor suppressor protein: analysis of the BRCA1 binding protein BAP1.</title>
        <authorList>
            <person name="Jensen D.E."/>
            <person name="Rauscher F.J. III"/>
        </authorList>
    </citation>
    <scope>VARIANTS ASP-95 AND VAL-178</scope>
</reference>
<reference key="16">
    <citation type="journal article" date="2002" name="EMBO J.">
        <title>Activation of the E3 ligase function of the BRCA1/BARD1 complex by polyubiquitin chains.</title>
        <authorList>
            <person name="Mallery D.L."/>
            <person name="Vandenberg C.J."/>
            <person name="Hiom K."/>
        </authorList>
    </citation>
    <scope>FUNCTION</scope>
</reference>
<reference key="17">
    <citation type="journal article" date="2008" name="Cancer Res.">
        <title>BRCA1-associated protein-1 is a tumor suppressor that requires deubiquitinating activity and nuclear localization.</title>
        <authorList>
            <person name="Ventii K.H."/>
            <person name="Devi N.S."/>
            <person name="Friedrich K.L."/>
            <person name="Chernova T.A."/>
            <person name="Tighiouart M."/>
            <person name="Van Meir E.G."/>
            <person name="Wilkinson K.D."/>
        </authorList>
    </citation>
    <scope>FUNCTION</scope>
    <scope>SUBCELLULAR LOCATION</scope>
    <scope>NUCLEAR LOCALIZATION SIGNAL</scope>
    <scope>MUTAGENESIS OF CYS-91; 656-LYS--ARG-661 AND 717-ARG--ARG-722</scope>
    <scope>CHARACTERIZATION OF VARIANTS ASP-95 AND VAL-178</scope>
</reference>
<reference key="18">
    <citation type="journal article" date="2009" name="Cancer Res.">
        <title>BRCA1-associated protein 1 interferes with BRCA1/BARD1 RING heterodimer activity.</title>
        <authorList>
            <person name="Nishikawa H."/>
            <person name="Wu W."/>
            <person name="Koike A."/>
            <person name="Kojima R."/>
            <person name="Gomi H."/>
            <person name="Fukuda M."/>
            <person name="Ohta T."/>
        </authorList>
    </citation>
    <scope>FUNCTION</scope>
    <scope>INTERACTION WITH BARD1 AND BRCA1</scope>
    <scope>CHARACTERIZATION OF VARIANT KURIS SER-91</scope>
</reference>
<reference key="19">
    <citation type="journal article" date="2009" name="J. Biol. Chem.">
        <title>The deubiquitinating enzyme BAP1 regulates cell growth via interaction with HCF-1.</title>
        <authorList>
            <person name="Machida Y.J."/>
            <person name="Machida Y."/>
            <person name="Vashisht A.A."/>
            <person name="Wohlschlegel J.A."/>
            <person name="Dutta A."/>
        </authorList>
    </citation>
    <scope>FUNCTION</scope>
    <scope>SUBCELLULAR LOCATION</scope>
    <scope>INTERACTION WITH HCFC1</scope>
    <scope>MUTAGENESIS OF 363-ASN--TYR-366</scope>
    <scope>CHARACTERIZATION OF VARIANT KURIS SER-91</scope>
</reference>
<reference key="20">
    <citation type="journal article" date="2009" name="Mol. Cell. Biol.">
        <title>Association of C-terminal ubiquitin hydrolase BRCA1-associated protein 1 with cell cycle regulator host cell factor 1.</title>
        <authorList>
            <person name="Misaghi S."/>
            <person name="Ottosen S."/>
            <person name="Izrael-Tomasevic A."/>
            <person name="Arnott D."/>
            <person name="Lamkanfi M."/>
            <person name="Lee J."/>
            <person name="Liu J."/>
            <person name="O'Rourke K."/>
            <person name="Dixit V.M."/>
            <person name="Wilson A.C."/>
        </authorList>
    </citation>
    <scope>FUNCTION</scope>
    <scope>SUBCELLULAR LOCATION</scope>
    <scope>INTERACTION WITH HCFC1</scope>
    <scope>MUTAGENESIS OF CYS-91 AND 363-ASN--TYR-366</scope>
</reference>
<reference key="21">
    <citation type="journal article" date="2010" name="Mol. Cell. Biol.">
        <title>The ubiquitin carboxyl hydrolase BAP1 forms a ternary complex with YY1 and HCF-1 and is a critical regulator of gene expression.</title>
        <authorList>
            <person name="Yu H."/>
            <person name="Mashtalir N."/>
            <person name="Daou S."/>
            <person name="Hammond-Martel I."/>
            <person name="Ross J."/>
            <person name="Sui G."/>
            <person name="Hart G.W."/>
            <person name="Rauscher F.J. III"/>
            <person name="Drobetsky E."/>
            <person name="Milot E."/>
            <person name="Shi Y."/>
            <person name="Affar el B."/>
        </authorList>
    </citation>
    <scope>FUNCTION</scope>
    <scope>IDENTIFICATION IN THE PR-DUB COMPLEX</scope>
    <scope>INTERACTION WITH YY1 AND HCFC1</scope>
    <scope>IDENTIFICATION BY MASS SPECTROMETRY</scope>
    <scope>CHARACTERIZATION OF VARIANT KURIS SER-91</scope>
</reference>
<reference key="22">
    <citation type="journal article" date="2010" name="Nature">
        <title>Histone H2A deubiquitinase activity of the Polycomb repressive complex PR-DUB.</title>
        <authorList>
            <person name="Scheuermann J.C."/>
            <person name="de Ayala Alonso A.G."/>
            <person name="Oktaba K."/>
            <person name="Ly-Hartig N."/>
            <person name="McGinty R.K."/>
            <person name="Fraterman S."/>
            <person name="Wilm M."/>
            <person name="Muir T.W."/>
            <person name="Muller J."/>
        </authorList>
    </citation>
    <scope>FUNCTION</scope>
    <scope>CATALYTIC ACTIVITY</scope>
    <scope>IDENTIFICATION IN THE PR-DUB COMPLEX</scope>
    <scope>INTERACTION WITH ASXL1</scope>
</reference>
<reference key="23">
    <citation type="journal article" date="2014" name="Mol. Cell">
        <title>Autodeubiquitination protects the tumor suppressor BAP1 from cytoplasmic sequestration mediated by the atypical ubiquitin ligase UBE2O.</title>
        <authorList>
            <person name="Mashtalir N."/>
            <person name="Daou S."/>
            <person name="Barbour H."/>
            <person name="Sen N.N."/>
            <person name="Gagnon J."/>
            <person name="Hammond-Martel I."/>
            <person name="Dar H.H."/>
            <person name="Therrien M."/>
            <person name="Affar E.B."/>
        </authorList>
    </citation>
    <scope>FUNCTION</scope>
    <scope>SUBCELLULAR LOCATION</scope>
    <scope>UBIQUITINATION</scope>
    <scope>NUCLEAR LOCALIZATION SIGNAL</scope>
    <scope>MUTAGENESIS OF 691-LEU--LYS-711</scope>
</reference>
<reference key="24">
    <citation type="journal article" date="2014" name="Nucleic Acids Res.">
        <title>The forkhead transcription factor FOXK2 acts as a chromatin targeting factor for the BAP1-containing histone deubiquitinase complex.</title>
        <authorList>
            <person name="Ji Z."/>
            <person name="Mohammed H."/>
            <person name="Webber A."/>
            <person name="Ridsdale J."/>
            <person name="Han N."/>
            <person name="Carroll J.S."/>
            <person name="Sharrocks A.D."/>
        </authorList>
    </citation>
    <scope>SUBCELLULAR LOCATION</scope>
    <scope>INTERACTION WITH FOXK2</scope>
</reference>
<reference key="25">
    <citation type="journal article" date="2014" name="Proteomics">
        <title>MBD5 and MBD6 interact with the human PR-DUB complex through their methyl-CpG-binding domain.</title>
        <authorList>
            <person name="Baymaz H.I."/>
            <person name="Fournier A."/>
            <person name="Laget S."/>
            <person name="Ji Z."/>
            <person name="Jansen P.W."/>
            <person name="Smits A.H."/>
            <person name="Ferry L."/>
            <person name="Mensinga A."/>
            <person name="Poser I."/>
            <person name="Sharrocks A."/>
            <person name="Defossez P.A."/>
            <person name="Vermeulen M."/>
        </authorList>
    </citation>
    <scope>IDENTIFICATION IN THE PR-DUB COMPLEX</scope>
    <scope>IDENTIFICATION BY MASS SPECTROMETRY</scope>
</reference>
<reference key="26">
    <citation type="journal article" date="2018" name="Nat. Commun.">
        <title>A bidentate Polycomb Repressive-Deubiquitinase complex is required for efficient activity on nucleosomes.</title>
        <authorList>
            <person name="Foglizzo M."/>
            <person name="Middleton A.J."/>
            <person name="Burgess A.E."/>
            <person name="Crowther J.M."/>
            <person name="Dobson R.C.J."/>
            <person name="Murphy J.M."/>
            <person name="Day C.L."/>
            <person name="Mace P.D."/>
        </authorList>
    </citation>
    <scope>CATALYTIC ACTIVITY</scope>
    <scope>BIOPHYSICOCHEMICAL PROPERTIES</scope>
    <scope>SUBUNIT</scope>
    <scope>DOMAIN</scope>
    <scope>MUTAGENESIS OF ASN-251; LEU-635 AND 713-ARG--GLN-729</scope>
</reference>
<reference key="27">
    <citation type="journal article" date="2019" name="Nat. Commun.">
        <title>BAP1 complex promotes transcription by opposing PRC1-mediated H2A ubiquitylation.</title>
        <authorList>
            <person name="Campagne A."/>
            <person name="Lee M.K."/>
            <person name="Zielinski D."/>
            <person name="Michaud A."/>
            <person name="Le Corre S."/>
            <person name="Dingli F."/>
            <person name="Chen H."/>
            <person name="Shahidian L.Z."/>
            <person name="Vassilev I."/>
            <person name="Servant N."/>
            <person name="Loew D."/>
            <person name="Pasmant E."/>
            <person name="Postel-Vinay S."/>
            <person name="Wassef M."/>
            <person name="Margueron R."/>
        </authorList>
    </citation>
    <scope>FUNCTION</scope>
    <scope>IDENTIFICATION IN THE PR-DUB COMPLEX</scope>
    <scope>SUBCELLULAR LOCATION</scope>
    <scope>IDENTIFICATION BY MASS SPECTROMETRY</scope>
</reference>
<reference key="28">
    <citation type="journal article" date="2021" name="Elife">
        <title>BAP1/ASXL complex modulation regulates epithelial-mesenchymal transition during trophoblast differentiation and invasion.</title>
        <authorList>
            <person name="Perez-Garcia V."/>
            <person name="Lea G."/>
            <person name="Lopez-Jimenez P."/>
            <person name="Okkenhaug H."/>
            <person name="Burton G.J."/>
            <person name="Moffett A."/>
            <person name="Turco M.Y."/>
            <person name="Hemberger M."/>
        </authorList>
    </citation>
    <scope>FUNCTION</scope>
    <scope>TISSUE SPECIFICITY</scope>
    <scope>DEVELOPMENTAL STAGE</scope>
</reference>
<reference key="29">
    <citation type="journal article" date="2022" name="Genome Biol.">
        <title>MBD5 and MBD6 stabilize the BAP1 complex and promote BAP1-dependent cancer.</title>
        <authorList>
            <person name="Tsuboyama N."/>
            <person name="Szczepanski A.P."/>
            <person name="Zhao Z."/>
            <person name="Wang L."/>
        </authorList>
    </citation>
    <scope>FUNCTION</scope>
    <scope>IDENTIFICATION IN THE PR-DUB COMPLEX</scope>
    <scope>INTERACTION WITH ASXL1</scope>
    <scope>IDENTIFICATION BY MASS SPECTROMETRY</scope>
</reference>
<reference evidence="42" key="30">
    <citation type="journal article" date="2022" name="J. Cell Biol.">
        <title>Tumor suppressor BAP1 nuclear import is governed by transportin-1.</title>
        <authorList>
            <person name="Yang T.J."/>
            <person name="Li T.N."/>
            <person name="Huang R.S."/>
            <person name="Pan M.Y."/>
            <person name="Lin S.Y."/>
            <person name="Lin S."/>
            <person name="Wu K.P."/>
            <person name="Wang L.H."/>
            <person name="Hsu S.D."/>
        </authorList>
    </citation>
    <scope>X-RAY CRYSTALLOGRAPHY (3.76 ANGSTROMS) OF 706-724</scope>
    <scope>SUBUNIT</scope>
    <scope>INTERACTION WITH TNPO1; KPNA1 AND KPNA2</scope>
    <scope>SUBCELLULAR LOCATION</scope>
    <scope>DOMAIN NLS</scope>
    <scope>UBIQUITINATION</scope>
    <scope>MUTAGENESIS OF 684-GLN--GLN-729</scope>
    <scope>IDENTIFICATION BY MASS SPECTROMETRY</scope>
</reference>
<reference evidence="43" key="31">
    <citation type="journal article" date="2023" name="Nature">
        <title>Basis of the H2AK119specificity of the Polycomb repressive deubiquitinase.</title>
        <authorList>
            <person name="Ge W."/>
            <person name="Yu C."/>
            <person name="Li J."/>
            <person name="Yu Z."/>
            <person name="Li X."/>
            <person name="Zhang Y."/>
            <person name="Liu C.P."/>
            <person name="Li Y."/>
            <person name="Tian C."/>
            <person name="Zhang X."/>
            <person name="Li G."/>
            <person name="Zhu B."/>
            <person name="Xu R.M."/>
        </authorList>
    </citation>
    <scope>STRUCTURE BY ELECTRON MICROSCOPY (3.00 ANGSTROMS) IN COMPLEX WITH ASXL1; UBB AND THE CHROMATOSOME COMPLEX</scope>
    <scope>INTERACTION WITH ASXL1 AND CHROMATOSOME COMPLEX</scope>
    <scope>DOMAIN C-TERMINAL TAIL AND UCH</scope>
    <scope>MUTAGENESIS OF 56-ARG--ARG-60; 697-SER--GLN-729; 699-ARG--GLN-702; ARG-699; ARG-700; ARG-701; GLN-702; GLY-703; ARG-708; 711-LYS--ARG-718; 711-LYS--GLN-729; ARG-713 AND 718-ARG--GLN-729</scope>
</reference>
<reference evidence="44" key="32">
    <citation type="journal article" date="2023" name="Sci. Adv.">
        <title>Structural basis of histone H2A lysine 119 deubiquitination by Polycomb repressive deubiquitinase BAP1/ASXL1.</title>
        <authorList>
            <person name="Thomas J.F."/>
            <person name="Valencia-Sanchez M.I."/>
            <person name="Tamburri S."/>
            <person name="Gloor S.L."/>
            <person name="Rustichelli S."/>
            <person name="Godinez-Lopez V."/>
            <person name="De Ioannes P."/>
            <person name="Lee R."/>
            <person name="Abini-Agbomson S."/>
            <person name="Gretarsson K."/>
            <person name="Burg J.M."/>
            <person name="Hickman A.R."/>
            <person name="Sun L."/>
            <person name="Gopinath S."/>
            <person name="Taylor H.F."/>
            <person name="Sun Z.W."/>
            <person name="Ezell R.J."/>
            <person name="Vaidya A."/>
            <person name="Meiners M.J."/>
            <person name="Cheek M.A."/>
            <person name="Rice W.J."/>
            <person name="Svetlov V."/>
            <person name="Nudler E."/>
            <person name="Lu C."/>
            <person name="Keogh M.C."/>
            <person name="Pasini D."/>
            <person name="Armache K.J."/>
        </authorList>
    </citation>
    <scope>STRUCTURE BY ELECTRON MICROSCOPY (3.20 ANGSTROMS) IN COMPLEX WITH ASXL1; UBC AND THE XENOPUS NUCLEOSOME COMPLEX</scope>
    <scope>INTERACTION WITH ASXL1 AND THE NUCLEOSOME COMPLEX</scope>
    <scope>DOMAIN UCH AND ARG-FINGER</scope>
    <scope>MUTAGENESIS OF 56-ARG--ARG-60; ARG-56; ARG-59; 699-ARG--ARG-701; 699-ARG-ARG-700; ARG-699 AND ARG-701</scope>
</reference>
<reference key="33">
    <citation type="journal article" date="2011" name="J. Med. Genet.">
        <title>Germline BAP1 mutation predisposes to uveal melanoma, lung adenocarcinoma, meningioma, and other cancers.</title>
        <authorList>
            <person name="Abdel-Rahman M.H."/>
            <person name="Pilarski R."/>
            <person name="Cebulla C.M."/>
            <person name="Massengill J.B."/>
            <person name="Christopher B.N."/>
            <person name="Boru G."/>
            <person name="Hovland P."/>
            <person name="Davidorf F.H."/>
        </authorList>
    </citation>
    <scope>VARIANT TPDS1 267-GLN--GLN-729 DEL</scope>
    <scope>INVOLVEMENT IN TPDS1</scope>
</reference>
<reference key="34">
    <citation type="journal article" date="2011" name="Nat. Genet.">
        <title>The nuclear deubiquitinase BAP1 is commonly inactivated by somatic mutations and 3p21.1 losses in malignant pleural mesothelioma.</title>
        <authorList>
            <person name="Bott M."/>
            <person name="Brevet M."/>
            <person name="Taylor B.S."/>
            <person name="Shimizu S."/>
            <person name="Ito T."/>
            <person name="Wang L."/>
            <person name="Creaney J."/>
            <person name="Lake R.A."/>
            <person name="Zakowski M.F."/>
            <person name="Reva B."/>
            <person name="Sander C."/>
            <person name="Delsite R."/>
            <person name="Powell S."/>
            <person name="Zhou Q."/>
            <person name="Shen R."/>
            <person name="Olshen A."/>
            <person name="Rusch V."/>
            <person name="Ladanyi M."/>
        </authorList>
    </citation>
    <scope>INVOLVEMENT IN MESOM</scope>
    <scope>VARIANTS CYS-63; VAL-81; TRP-91; ASP-95; ALA-315 AND VAL-685</scope>
</reference>
<reference key="35">
    <citation type="journal article" date="2011" name="Nat. Genet.">
        <title>Germline mutations in BAP1 predispose to melanocytic tumors.</title>
        <authorList>
            <person name="Wiesner T."/>
            <person name="Obenauf A.C."/>
            <person name="Murali R."/>
            <person name="Fried I."/>
            <person name="Griewank K.G."/>
            <person name="Ulz P."/>
            <person name="Windpassinger C."/>
            <person name="Wackernagel W."/>
            <person name="Loy S."/>
            <person name="Wolf I."/>
            <person name="Viale A."/>
            <person name="Lash A.E."/>
            <person name="Pirun M."/>
            <person name="Socci N.D."/>
            <person name="Rutten A."/>
            <person name="Palmedo G."/>
            <person name="Abramson D."/>
            <person name="Offit K."/>
            <person name="Ott A."/>
            <person name="Becker J.C."/>
            <person name="Cerroni L."/>
            <person name="Kutzner H."/>
            <person name="Bastian B.C."/>
            <person name="Speicher M.R."/>
        </authorList>
    </citation>
    <scope>INVOLVEMENT IN TPDS1</scope>
</reference>
<reference key="36">
    <citation type="journal article" date="2011" name="Nat. Genet.">
        <title>Germline BAP1 mutations predispose to malignant mesothelioma.</title>
        <authorList>
            <person name="Testa J.R."/>
            <person name="Cheung M."/>
            <person name="Pei J."/>
            <person name="Below J.E."/>
            <person name="Tan Y."/>
            <person name="Sementino E."/>
            <person name="Cox N.J."/>
            <person name="Dogan A.U."/>
            <person name="Pass H.I."/>
            <person name="Trusa S."/>
            <person name="Hesdorffer M."/>
            <person name="Nasu M."/>
            <person name="Powers A."/>
            <person name="Rivera Z."/>
            <person name="Comertpay S."/>
            <person name="Tanji M."/>
            <person name="Gaudino G."/>
            <person name="Yang H."/>
            <person name="Carbone M."/>
        </authorList>
    </citation>
    <scope>INVOLVEMENT IN TPDS1 AND MESOM</scope>
</reference>
<reference key="37">
    <citation type="journal article" date="2013" name="Am. J. Hum. Genet.">
        <title>Germline BAP1 mutations predispose to renal cell carcinomas.</title>
        <authorList>
            <person name="Popova T."/>
            <person name="Hebert L."/>
            <person name="Jacquemin V."/>
            <person name="Gad S."/>
            <person name="Caux-Moncoutier V."/>
            <person name="Dubois-d'Enghien C."/>
            <person name="Richaudeau B."/>
            <person name="Renaudin X."/>
            <person name="Sellers J."/>
            <person name="Nicolas A."/>
            <person name="Sastre-Garau X."/>
            <person name="Desjardins L."/>
            <person name="Gyapay G."/>
            <person name="Raynal V."/>
            <person name="Sinilnikova O.M."/>
            <person name="Andrieu N."/>
            <person name="Manie E."/>
            <person name="de Pauw A."/>
            <person name="Gesta P."/>
            <person name="Bonadona V."/>
            <person name="Maugard C.M."/>
            <person name="Penet C."/>
            <person name="Avril M.F."/>
            <person name="Barillot E."/>
            <person name="Cabaret O."/>
            <person name="Delattre O."/>
            <person name="Richard S."/>
            <person name="Caron O."/>
            <person name="Benfodda M."/>
            <person name="Hu H.H."/>
            <person name="Soufir N."/>
            <person name="Bressac-de Paillerets B."/>
            <person name="Stoppa-Lyonnet D."/>
            <person name="Stern M.H."/>
        </authorList>
    </citation>
    <scope>VARIANT TPDS1 ALA-93</scope>
</reference>
<reference key="38">
    <citation type="journal article" date="2015" name="Clin. Genet.">
        <title>Germline BAP1 mutations predispose also to multiple basal cell carcinomas.</title>
        <authorList>
            <person name="de la Fouchardiere A."/>
            <person name="Cabaret O."/>
            <person name="Savin L."/>
            <person name="Combemale P."/>
            <person name="Schvartz H."/>
            <person name="Penet C."/>
            <person name="Bonadona V."/>
            <person name="Soufir N."/>
            <person name="Bressac-de Paillerets B."/>
        </authorList>
    </citation>
    <scope>VARIANT PHE-47</scope>
</reference>
<reference key="39">
    <citation type="journal article" date="2015" name="J. Biol. Chem.">
        <title>BRCA1-associated protein 1 (BAP1) deubiquitinase antagonizes the ubiquitin-mediated activation of FoxK2 target genes.</title>
        <authorList>
            <person name="Okino Y."/>
            <person name="Machida Y."/>
            <person name="Frankland-Searby S."/>
            <person name="Machida Y.J."/>
        </authorList>
    </citation>
    <scope>FUNCTION</scope>
    <scope>INTERACTION WITH FOXK1 AND FOXK2</scope>
    <scope>PHOSPHORYLATION AT THR-493</scope>
    <scope>MUTAGENESIS OF SER-489; SER-492; THR-493 AND THR-495</scope>
    <scope>CHARACTERIZATION OF VARIANT KURIS SER-91</scope>
</reference>
<reference key="40">
    <citation type="journal article" date="2015" name="Ophthalmic Genet.">
        <title>Analysis of BAP1 Germline gene mutation in young uveal melanoma patients.</title>
        <authorList>
            <person name="Cebulla C.M."/>
            <person name="Binkley E.M."/>
            <person name="Pilarski R."/>
            <person name="Massengill J.B."/>
            <person name="Rai K."/>
            <person name="Liebner D.A."/>
            <person name="Marino M.J."/>
            <person name="Singh A.D."/>
            <person name="Abdel-Rahman M.H."/>
        </authorList>
    </citation>
    <scope>INVOLVEMENT IN UVM2</scope>
</reference>
<reference key="41">
    <citation type="journal article" date="2015" name="Sci. Rep.">
        <title>Cancer associated missense mutations in BAP1 catalytic domain induce amyloidogenic aggregation: A new insight in enzymatic inactivation.</title>
        <authorList>
            <person name="Bhattacharya S."/>
            <person name="Hanpude P."/>
            <person name="Maiti T.K."/>
        </authorList>
    </citation>
    <scope>CHARACTERIZATION OF VARIANTS PHE-47; VAL-81; ASP-95 AND VAL-178</scope>
</reference>
<reference key="42">
    <citation type="journal article" date="2020" name="Ocul. Oncol. Pathol.">
        <title>BAP1 germline mutation associated with bilateral primary uveal melanoma.</title>
        <authorList>
            <person name="Yu M.D."/>
            <person name="Masoomian B."/>
            <person name="Shields J.A."/>
            <person name="Shields C.L."/>
        </authorList>
    </citation>
    <scope>INVOLVEMENT IN UVM2</scope>
</reference>
<reference key="43">
    <citation type="journal article" date="2022" name="Am. J. Hum. Genet.">
        <title>Rare germline heterozygous missense variants in BRCA1-associated protein 1, BAP1, cause a syndromic neurodevelopmental disorder.</title>
        <authorList>
            <consortium name="Undiagnosed Diseases Network"/>
            <person name="Kuery S."/>
            <person name="Ebstein F."/>
            <person name="Molle A."/>
            <person name="Besnard T."/>
            <person name="Lee M.K."/>
            <person name="Vignard V."/>
            <person name="Hery T."/>
            <person name="Nizon M."/>
            <person name="Mancini G.M.S."/>
            <person name="Giltay J.C."/>
            <person name="Cogne B."/>
            <person name="McWalter K."/>
            <person name="Deb W."/>
            <person name="Mor-Shaked H."/>
            <person name="Li H."/>
            <person name="Schnur R.E."/>
            <person name="Wentzensen I.M."/>
            <person name="Denomme-Pichon A.S."/>
            <person name="Fourgeux C."/>
            <person name="Verheijen F.W."/>
            <person name="Faurie E."/>
            <person name="Schot R."/>
            <person name="Stevens C.A."/>
            <person name="Smits D.J."/>
            <person name="Barr E."/>
            <person name="Sheffer R."/>
            <person name="Bernstein J.A."/>
            <person name="Stimach C.L."/>
            <person name="Kovitch E."/>
            <person name="Shashi V."/>
            <person name="Schoch K."/>
            <person name="Smith W."/>
            <person name="van Jaarsveld R.H."/>
            <person name="Hurst A.C.E."/>
            <person name="Smith K."/>
            <person name="Baugh E.H."/>
            <person name="Bohm S.G."/>
            <person name="Vyhnalkova E."/>
            <person name="Ryba L."/>
            <person name="Delnatte C."/>
            <person name="Neira J."/>
            <person name="Bonneau D."/>
            <person name="Toutain A."/>
            <person name="Rosenfeld J.A."/>
            <person name="Audebert-Bellanger S."/>
            <person name="Gilbert-Dussardier B."/>
            <person name="Odent S."/>
            <person name="Laumonnier F."/>
            <person name="Berger S.I."/>
            <person name="Smith A.C.M."/>
            <person name="Bourdeaut F."/>
            <person name="Stern M.H."/>
            <person name="Redon R."/>
            <person name="Krueger E."/>
            <person name="Margueron R."/>
            <person name="Bezieau S."/>
            <person name="Poschmann J."/>
            <person name="Isidor B."/>
        </authorList>
    </citation>
    <scope>VARIANTS KURIS ALA-12; THR-12; LYS-31; PRO-49; ARG-91; GLY-91; SER-91; ARG-169 AND GLN-718</scope>
    <scope>CHARACTERIZATION OF VARIANTS KURIS THR-12; ARG-91; SER-91; ARG-169 AND GLN-718</scope>
    <scope>INVOLVEMENT IN KURIS</scope>
    <scope>FUNCTION</scope>
    <scope>SUBCELLULAR LOCATION</scope>
</reference>
<evidence type="ECO:0000250" key="1">
    <source>
        <dbReference type="UniProtKB" id="Q99PU7"/>
    </source>
</evidence>
<evidence type="ECO:0000255" key="2"/>
<evidence type="ECO:0000255" key="3">
    <source>
        <dbReference type="PROSITE-ProRule" id="PRU01393"/>
    </source>
</evidence>
<evidence type="ECO:0000255" key="4">
    <source>
        <dbReference type="PROSITE-ProRule" id="PRU01394"/>
    </source>
</evidence>
<evidence type="ECO:0000256" key="5">
    <source>
        <dbReference type="SAM" id="MobiDB-lite"/>
    </source>
</evidence>
<evidence type="ECO:0000269" key="6">
    <source>
    </source>
</evidence>
<evidence type="ECO:0000269" key="7">
    <source>
    </source>
</evidence>
<evidence type="ECO:0000269" key="8">
    <source>
    </source>
</evidence>
<evidence type="ECO:0000269" key="9">
    <source>
    </source>
</evidence>
<evidence type="ECO:0000269" key="10">
    <source>
    </source>
</evidence>
<evidence type="ECO:0000269" key="11">
    <source>
    </source>
</evidence>
<evidence type="ECO:0000269" key="12">
    <source>
    </source>
</evidence>
<evidence type="ECO:0000269" key="13">
    <source>
    </source>
</evidence>
<evidence type="ECO:0000269" key="14">
    <source>
    </source>
</evidence>
<evidence type="ECO:0000269" key="15">
    <source>
    </source>
</evidence>
<evidence type="ECO:0000269" key="16">
    <source>
    </source>
</evidence>
<evidence type="ECO:0000269" key="17">
    <source>
    </source>
</evidence>
<evidence type="ECO:0000269" key="18">
    <source>
    </source>
</evidence>
<evidence type="ECO:0000269" key="19">
    <source>
    </source>
</evidence>
<evidence type="ECO:0000269" key="20">
    <source>
    </source>
</evidence>
<evidence type="ECO:0000269" key="21">
    <source>
    </source>
</evidence>
<evidence type="ECO:0000269" key="22">
    <source>
    </source>
</evidence>
<evidence type="ECO:0000269" key="23">
    <source>
    </source>
</evidence>
<evidence type="ECO:0000269" key="24">
    <source>
    </source>
</evidence>
<evidence type="ECO:0000269" key="25">
    <source>
    </source>
</evidence>
<evidence type="ECO:0000269" key="26">
    <source>
    </source>
</evidence>
<evidence type="ECO:0000269" key="27">
    <source>
    </source>
</evidence>
<evidence type="ECO:0000269" key="28">
    <source>
    </source>
</evidence>
<evidence type="ECO:0000269" key="29">
    <source>
    </source>
</evidence>
<evidence type="ECO:0000269" key="30">
    <source>
    </source>
</evidence>
<evidence type="ECO:0000269" key="31">
    <source>
    </source>
</evidence>
<evidence type="ECO:0000269" key="32">
    <source>
    </source>
</evidence>
<evidence type="ECO:0000269" key="33">
    <source>
    </source>
</evidence>
<evidence type="ECO:0000269" key="34">
    <source>
    </source>
</evidence>
<evidence type="ECO:0000269" key="35">
    <source>
    </source>
</evidence>
<evidence type="ECO:0000303" key="36">
    <source>
    </source>
</evidence>
<evidence type="ECO:0000303" key="37">
    <source>
    </source>
</evidence>
<evidence type="ECO:0000303" key="38">
    <source ref="2"/>
</evidence>
<evidence type="ECO:0000305" key="39"/>
<evidence type="ECO:0000305" key="40">
    <source>
    </source>
</evidence>
<evidence type="ECO:0000312" key="41">
    <source>
        <dbReference type="HGNC" id="HGNC:950"/>
    </source>
</evidence>
<evidence type="ECO:0007744" key="42">
    <source>
        <dbReference type="PDB" id="7VPW"/>
    </source>
</evidence>
<evidence type="ECO:0007744" key="43">
    <source>
        <dbReference type="PDB" id="8H1T"/>
    </source>
</evidence>
<evidence type="ECO:0007744" key="44">
    <source>
        <dbReference type="PDB" id="8SVF"/>
    </source>
</evidence>
<evidence type="ECO:0007744" key="45">
    <source>
    </source>
</evidence>
<evidence type="ECO:0007829" key="46">
    <source>
        <dbReference type="PDB" id="8H1T"/>
    </source>
</evidence>
<evidence type="ECO:0007829" key="47">
    <source>
        <dbReference type="PDB" id="8SVF"/>
    </source>
</evidence>
<accession>Q92560</accession>
<accession>A8K993</accession>
<accession>Q6LEM0</accession>
<accession>Q7Z5E8</accession>
<name>BAP1_HUMAN</name>
<organism>
    <name type="scientific">Homo sapiens</name>
    <name type="common">Human</name>
    <dbReference type="NCBI Taxonomy" id="9606"/>
    <lineage>
        <taxon>Eukaryota</taxon>
        <taxon>Metazoa</taxon>
        <taxon>Chordata</taxon>
        <taxon>Craniata</taxon>
        <taxon>Vertebrata</taxon>
        <taxon>Euteleostomi</taxon>
        <taxon>Mammalia</taxon>
        <taxon>Eutheria</taxon>
        <taxon>Euarchontoglires</taxon>
        <taxon>Primates</taxon>
        <taxon>Haplorrhini</taxon>
        <taxon>Catarrhini</taxon>
        <taxon>Hominidae</taxon>
        <taxon>Homo</taxon>
    </lineage>
</organism>
<protein>
    <recommendedName>
        <fullName evidence="39">Ubiquitin carboxyl-terminal hydrolase BAP1</fullName>
        <ecNumber evidence="12 26 35">3.4.19.12</ecNumber>
    </recommendedName>
    <alternativeName>
        <fullName evidence="37">BRCA1-associated protein 1</fullName>
    </alternativeName>
    <alternativeName>
        <fullName evidence="38">Cerebral protein 6</fullName>
    </alternativeName>
</protein>